<sequence>MSGASVKVAVRVRPFNSRETSKESKCIIQMQGNSTSIINPKNPKEAPKSFSFDYSYWSHTSPEDPCFASQNRVYNDIGKEMLLHAFEGYNVCIFAYGQTGAGKSYTMMGKQEESQAGIIPQLCEELFEKINDNCNEEMSYSVEVSYMEIYCERVRDLLNPKNKGNLRVREHPLLGPYVEDLSKLAVTSYTDIADLMDAGNKARTVAATNMNETSSRSHAVFTIVFTQKKHDNETNLSTEKVSKISLVDLAGSERADSTGAKGTRLKEGANINKSLTTLGKVISALAEVDNCTSKSKKKKKTDFIPYRDSVLTWLLRENLGGNSRTAMVAALSPADINYDETLSTLRYADRAKQIKCNAVINEDPNAKLVRELKEEVTRLKDLLRAQGLGDIIDIDPLIDDYSGSGSKYLKDFQNNKHRYLLASENQRPGHFSTASMGSLTSSPSSCSLSSQVGLTSVTSIQERIMSTPGGEEAIERLKESEKIIAELNETWEEKLRKTEAIRMEREALLAEMGVAIREDGGTLGVFSPKKTPHLVNLNEDPLMSECLLYYIKDGITRVGQADAERRQDIVLSGAHIKEEHCIFRSERSNSGEVIVTLEPCERSETYVNGKRVSQPVQLRSGNRIIMGKNHVFRFNHPEQARAEREKTPSAETPSEPVDWTFAQRELLEKQGIDMKQEMEKRLQEMEILYKKEKEEADLLLEQQRLDYESKLQALQKQVETRSLAAETTEEEEEEEEVPWTQHEFELAQWAFRKWKSHQFTSLRDLLWGNAVYLKEANAISVELKKKVQFQFVLLTDTLYSPLPPELLPTEMEKTHEDRPFPRTVVAVEVQDLKNGATHYWSLEKLKQRLDLMREMYDRAGEMASSAQDESETTVTGSDPFYDRFHWFKLVGSSPIFHGCVNERLADRTPSPTFSTADSDITELADEQQDEMEDFDDEAFVDDAGSDAGTEEGSDLFSDGHDPFYDRSPWFILVGRAFVYLSNLLYPVPLIHRVAIVSEKGEVRGFLRVAVQAIAADEEAPDYGSGIRQSGTAKISFDNEYFNQSDFSSVAMTRSGLSLEELRIVEGQGQSSEVITPPEEISRINDLDLKSSTLLDGKMVMEGFSEEIGNHLKLGSAFTFRVTVLQASGILPEYADIFCQFNFLHRHDEAFSTEPLKNNGRGSPLAFYHVQNIAVEITESFVDYIKTKPIVFEVFGHYQQHPLHLQGQELNSPPQPCRRFFPPPMPLSKPVPATKLNTMSKTSLGQSMSKYDLLVWFEISELEPTGEYIPAVVDHTAGLPCQGTFLLHQGIQRRITVTIIHEKGSELHWKDVRELVVGRIRNKPEVDEAAVDAILSLNIISAKYLKSSHNSSRTFYRFEAVWDSSLHNSLLLNRVTPYGEKIYMTLSAYLELDHCIQPAVITKDVCMVFYSRDAKISPPRSLRSLFGSGYSKSPDSNRVTGIYELSLCKMSDTGSPGMQRRRRKILDTSVAYVRGEENLAGWRPRGDSLILEHQWELEKLELLHEVEKTRHFLLLRERLGDSIPKSLSDSLSPSLSSGTLSTSTSISSQISTTTFESAITPSESSGYDSGDIESLVDREKELATKCLQLLTHTFNREFSQVHGSVSDCKLSDISPIGRDPSESSFSSATLTPSSTCPSLVDSRSNSLDQKTPEANSRASSPCPEFEQFQIVPAVETPYLARAGKNEFLNLVPDIEEIRPSSVVSKKGYLHFKEPLYSNWAKHFVVVRRPYVFIYNSDKDPVERGIINLSTAQVEYSEDQQAMVKTPNTFAVCTKHRGVLLQALNDKDMNDWLYAFNPLLAGTIRSKLSRRCPSQSKY</sequence>
<reference key="1">
    <citation type="patent" date="2000-10-26" number="WO0063375">
        <title>DNA encoding a kinesin-like protein (hklp) comprising biallelic markers.</title>
        <authorList>
            <person name="Bougueleret L."/>
            <person name="Dufaure-Gare I."/>
            <person name="Grel P."/>
        </authorList>
    </citation>
    <scope>NUCLEOTIDE SEQUENCE [GENOMIC DNA] (ISOFORM 1)</scope>
</reference>
<reference key="2">
    <citation type="journal article" date="2000" name="Int. J. Oncol.">
        <title>Identification of the full-length KIAA0591 gene encoding a novel kinesin-related protein which is mapped to the neuroblastoma suppressor gene locus at 1p36.2.</title>
        <authorList>
            <person name="Nagai M."/>
            <person name="Ichimiya S."/>
            <person name="Ozaki T."/>
            <person name="Seki N."/>
            <person name="Mihara M."/>
            <person name="Furuta S."/>
            <person name="Ohira M."/>
            <person name="Tomioka N."/>
            <person name="Nomura N."/>
            <person name="Sakiyama S."/>
            <person name="Kubo O."/>
            <person name="Takakura K."/>
            <person name="Hori T."/>
            <person name="Nakagawara A."/>
        </authorList>
    </citation>
    <scope>NUCLEOTIDE SEQUENCE [MRNA] (ISOFORM 4)</scope>
    <scope>TISSUE SPECIFICITY</scope>
    <source>
        <tissue>Substantia nigra</tissue>
    </source>
</reference>
<reference key="3">
    <citation type="journal article" date="2001" name="Oncogene">
        <title>Genomic structure and mutational analysis of the human KIF1B gene which is homozygously deleted in neuroblastoma at chromosome 1p36.2.</title>
        <authorList>
            <person name="Yang H.W."/>
            <person name="Chen Y.Z."/>
            <person name="Takita J."/>
            <person name="Soeda E."/>
            <person name="Piao H.Y."/>
            <person name="Hayashi Y."/>
        </authorList>
    </citation>
    <scope>NUCLEOTIDE SEQUENCE [GENOMIC DNA] (ISOFORM 2)</scope>
    <scope>TISSUE SPECIFICITY</scope>
</reference>
<reference key="4">
    <citation type="submission" date="2001-07" db="EMBL/GenBank/DDBJ databases">
        <title>Identification of the human ortholog of mouse Kif1B, a kinesin superfamily motor protein.</title>
        <authorList>
            <person name="Park M."/>
            <person name="Shin H."/>
            <person name="Lee Y.M."/>
            <person name="Moon E."/>
            <person name="Choi W."/>
            <person name="Kim W."/>
        </authorList>
    </citation>
    <scope>NUCLEOTIDE SEQUENCE [MRNA] (ISOFORM 3)</scope>
</reference>
<reference key="5">
    <citation type="submission" date="2002-07" db="EMBL/GenBank/DDBJ databases">
        <title>Identification of splicing variants of KIF1Bbeta.</title>
        <authorList>
            <person name="Munirajan A.K."/>
            <person name="Ohira M."/>
            <person name="Nakagawara A."/>
        </authorList>
    </citation>
    <scope>NUCLEOTIDE SEQUENCE [MRNA] (ISOFORM 4)</scope>
</reference>
<reference key="6">
    <citation type="journal article" date="2003" name="Int. J. Oncol.">
        <title>Genomic structure and mutational analysis of the human KIF1Balpha gene located at 1p36.2 in neuroblastoma.</title>
        <authorList>
            <person name="Chen Y.Y."/>
            <person name="Takita J."/>
            <person name="Chen Y.Z."/>
            <person name="Yang H.W."/>
            <person name="Hanada R."/>
            <person name="Yamamoto K."/>
            <person name="Hayashi Y."/>
        </authorList>
    </citation>
    <scope>NUCLEOTIDE SEQUENCE [MRNA] (ISOFORM 3)</scope>
    <scope>TISSUE SPECIFICITY</scope>
    <source>
        <tissue>Neuroblastoma</tissue>
    </source>
</reference>
<reference key="7">
    <citation type="journal article" date="1998" name="DNA Res.">
        <title>Prediction of the coding sequences of unidentified human genes. IX. The complete sequences of 100 new cDNA clones from brain which can code for large proteins in vitro.</title>
        <authorList>
            <person name="Nagase T."/>
            <person name="Ishikawa K."/>
            <person name="Miyajima N."/>
            <person name="Tanaka A."/>
            <person name="Kotani H."/>
            <person name="Nomura N."/>
            <person name="Ohara O."/>
        </authorList>
    </citation>
    <scope>NUCLEOTIDE SEQUENCE [LARGE SCALE MRNA] (ISOFORM 1)</scope>
    <source>
        <tissue>Brain</tissue>
    </source>
</reference>
<reference key="8">
    <citation type="journal article" date="2000" name="DNA Res.">
        <title>Prediction of the coding sequences of unidentified human genes. XVII. The complete sequences of 100 new cDNA clones from brain which code for large proteins in vitro.</title>
        <authorList>
            <person name="Nagase T."/>
            <person name="Kikuno R."/>
            <person name="Ishikawa K."/>
            <person name="Hirosawa M."/>
            <person name="Ohara O."/>
        </authorList>
    </citation>
    <scope>NUCLEOTIDE SEQUENCE [LARGE SCALE MRNA] (ISOFORM 3)</scope>
    <source>
        <tissue>Brain</tissue>
    </source>
</reference>
<reference key="9">
    <citation type="journal article" date="2006" name="Nature">
        <title>The DNA sequence and biological annotation of human chromosome 1.</title>
        <authorList>
            <person name="Gregory S.G."/>
            <person name="Barlow K.F."/>
            <person name="McLay K.E."/>
            <person name="Kaul R."/>
            <person name="Swarbreck D."/>
            <person name="Dunham A."/>
            <person name="Scott C.E."/>
            <person name="Howe K.L."/>
            <person name="Woodfine K."/>
            <person name="Spencer C.C.A."/>
            <person name="Jones M.C."/>
            <person name="Gillson C."/>
            <person name="Searle S."/>
            <person name="Zhou Y."/>
            <person name="Kokocinski F."/>
            <person name="McDonald L."/>
            <person name="Evans R."/>
            <person name="Phillips K."/>
            <person name="Atkinson A."/>
            <person name="Cooper R."/>
            <person name="Jones C."/>
            <person name="Hall R.E."/>
            <person name="Andrews T.D."/>
            <person name="Lloyd C."/>
            <person name="Ainscough R."/>
            <person name="Almeida J.P."/>
            <person name="Ambrose K.D."/>
            <person name="Anderson F."/>
            <person name="Andrew R.W."/>
            <person name="Ashwell R.I.S."/>
            <person name="Aubin K."/>
            <person name="Babbage A.K."/>
            <person name="Bagguley C.L."/>
            <person name="Bailey J."/>
            <person name="Beasley H."/>
            <person name="Bethel G."/>
            <person name="Bird C.P."/>
            <person name="Bray-Allen S."/>
            <person name="Brown J.Y."/>
            <person name="Brown A.J."/>
            <person name="Buckley D."/>
            <person name="Burton J."/>
            <person name="Bye J."/>
            <person name="Carder C."/>
            <person name="Chapman J.C."/>
            <person name="Clark S.Y."/>
            <person name="Clarke G."/>
            <person name="Clee C."/>
            <person name="Cobley V."/>
            <person name="Collier R.E."/>
            <person name="Corby N."/>
            <person name="Coville G.J."/>
            <person name="Davies J."/>
            <person name="Deadman R."/>
            <person name="Dunn M."/>
            <person name="Earthrowl M."/>
            <person name="Ellington A.G."/>
            <person name="Errington H."/>
            <person name="Frankish A."/>
            <person name="Frankland J."/>
            <person name="French L."/>
            <person name="Garner P."/>
            <person name="Garnett J."/>
            <person name="Gay L."/>
            <person name="Ghori M.R.J."/>
            <person name="Gibson R."/>
            <person name="Gilby L.M."/>
            <person name="Gillett W."/>
            <person name="Glithero R.J."/>
            <person name="Grafham D.V."/>
            <person name="Griffiths C."/>
            <person name="Griffiths-Jones S."/>
            <person name="Grocock R."/>
            <person name="Hammond S."/>
            <person name="Harrison E.S.I."/>
            <person name="Hart E."/>
            <person name="Haugen E."/>
            <person name="Heath P.D."/>
            <person name="Holmes S."/>
            <person name="Holt K."/>
            <person name="Howden P.J."/>
            <person name="Hunt A.R."/>
            <person name="Hunt S.E."/>
            <person name="Hunter G."/>
            <person name="Isherwood J."/>
            <person name="James R."/>
            <person name="Johnson C."/>
            <person name="Johnson D."/>
            <person name="Joy A."/>
            <person name="Kay M."/>
            <person name="Kershaw J.K."/>
            <person name="Kibukawa M."/>
            <person name="Kimberley A.M."/>
            <person name="King A."/>
            <person name="Knights A.J."/>
            <person name="Lad H."/>
            <person name="Laird G."/>
            <person name="Lawlor S."/>
            <person name="Leongamornlert D.A."/>
            <person name="Lloyd D.M."/>
            <person name="Loveland J."/>
            <person name="Lovell J."/>
            <person name="Lush M.J."/>
            <person name="Lyne R."/>
            <person name="Martin S."/>
            <person name="Mashreghi-Mohammadi M."/>
            <person name="Matthews L."/>
            <person name="Matthews N.S.W."/>
            <person name="McLaren S."/>
            <person name="Milne S."/>
            <person name="Mistry S."/>
            <person name="Moore M.J.F."/>
            <person name="Nickerson T."/>
            <person name="O'Dell C.N."/>
            <person name="Oliver K."/>
            <person name="Palmeiri A."/>
            <person name="Palmer S.A."/>
            <person name="Parker A."/>
            <person name="Patel D."/>
            <person name="Pearce A.V."/>
            <person name="Peck A.I."/>
            <person name="Pelan S."/>
            <person name="Phelps K."/>
            <person name="Phillimore B.J."/>
            <person name="Plumb R."/>
            <person name="Rajan J."/>
            <person name="Raymond C."/>
            <person name="Rouse G."/>
            <person name="Saenphimmachak C."/>
            <person name="Sehra H.K."/>
            <person name="Sheridan E."/>
            <person name="Shownkeen R."/>
            <person name="Sims S."/>
            <person name="Skuce C.D."/>
            <person name="Smith M."/>
            <person name="Steward C."/>
            <person name="Subramanian S."/>
            <person name="Sycamore N."/>
            <person name="Tracey A."/>
            <person name="Tromans A."/>
            <person name="Van Helmond Z."/>
            <person name="Wall M."/>
            <person name="Wallis J.M."/>
            <person name="White S."/>
            <person name="Whitehead S.L."/>
            <person name="Wilkinson J.E."/>
            <person name="Willey D.L."/>
            <person name="Williams H."/>
            <person name="Wilming L."/>
            <person name="Wray P.W."/>
            <person name="Wu Z."/>
            <person name="Coulson A."/>
            <person name="Vaudin M."/>
            <person name="Sulston J.E."/>
            <person name="Durbin R.M."/>
            <person name="Hubbard T."/>
            <person name="Wooster R."/>
            <person name="Dunham I."/>
            <person name="Carter N.P."/>
            <person name="McVean G."/>
            <person name="Ross M.T."/>
            <person name="Harrow J."/>
            <person name="Olson M.V."/>
            <person name="Beck S."/>
            <person name="Rogers J."/>
            <person name="Bentley D.R."/>
        </authorList>
    </citation>
    <scope>NUCLEOTIDE SEQUENCE [LARGE SCALE GENOMIC DNA]</scope>
</reference>
<reference key="10">
    <citation type="journal article" date="2004" name="Genome Res.">
        <title>The status, quality, and expansion of the NIH full-length cDNA project: the Mammalian Gene Collection (MGC).</title>
        <authorList>
            <consortium name="The MGC Project Team"/>
        </authorList>
    </citation>
    <scope>NUCLEOTIDE SEQUENCE [LARGE SCALE MRNA] (ISOFORM 3)</scope>
    <scope>NUCLEOTIDE SEQUENCE [LARGE SCALE MRNA] OF 1238-1816 (ISOFORMS 1/2)</scope>
    <source>
        <tissue>Placenta</tissue>
    </source>
</reference>
<reference key="11">
    <citation type="submission" date="2003-05" db="EMBL/GenBank/DDBJ databases">
        <title>Cloning of human full-length CDSs in BD Creator(TM) system donor vector.</title>
        <authorList>
            <person name="Kalnine N."/>
            <person name="Chen X."/>
            <person name="Rolfs A."/>
            <person name="Halleck A."/>
            <person name="Hines L."/>
            <person name="Eisenstein S."/>
            <person name="Koundinya M."/>
            <person name="Raphael J."/>
            <person name="Moreira D."/>
            <person name="Kelley T."/>
            <person name="LaBaer J."/>
            <person name="Lin Y."/>
            <person name="Phelan M."/>
            <person name="Farmer A."/>
        </authorList>
    </citation>
    <scope>NUCLEOTIDE SEQUENCE [LARGE SCALE MRNA] OF 1238-1816 (ISOFORMS 1/2)</scope>
</reference>
<reference key="12">
    <citation type="journal article" date="2004" name="Nat. Genet.">
        <title>Complete sequencing and characterization of 21,243 full-length human cDNAs.</title>
        <authorList>
            <person name="Ota T."/>
            <person name="Suzuki Y."/>
            <person name="Nishikawa T."/>
            <person name="Otsuki T."/>
            <person name="Sugiyama T."/>
            <person name="Irie R."/>
            <person name="Wakamatsu A."/>
            <person name="Hayashi K."/>
            <person name="Sato H."/>
            <person name="Nagai K."/>
            <person name="Kimura K."/>
            <person name="Makita H."/>
            <person name="Sekine M."/>
            <person name="Obayashi M."/>
            <person name="Nishi T."/>
            <person name="Shibahara T."/>
            <person name="Tanaka T."/>
            <person name="Ishii S."/>
            <person name="Yamamoto J."/>
            <person name="Saito K."/>
            <person name="Kawai Y."/>
            <person name="Isono Y."/>
            <person name="Nakamura Y."/>
            <person name="Nagahari K."/>
            <person name="Murakami K."/>
            <person name="Yasuda T."/>
            <person name="Iwayanagi T."/>
            <person name="Wagatsuma M."/>
            <person name="Shiratori A."/>
            <person name="Sudo H."/>
            <person name="Hosoiri T."/>
            <person name="Kaku Y."/>
            <person name="Kodaira H."/>
            <person name="Kondo H."/>
            <person name="Sugawara M."/>
            <person name="Takahashi M."/>
            <person name="Kanda K."/>
            <person name="Yokoi T."/>
            <person name="Furuya T."/>
            <person name="Kikkawa E."/>
            <person name="Omura Y."/>
            <person name="Abe K."/>
            <person name="Kamihara K."/>
            <person name="Katsuta N."/>
            <person name="Sato K."/>
            <person name="Tanikawa M."/>
            <person name="Yamazaki M."/>
            <person name="Ninomiya K."/>
            <person name="Ishibashi T."/>
            <person name="Yamashita H."/>
            <person name="Murakawa K."/>
            <person name="Fujimori K."/>
            <person name="Tanai H."/>
            <person name="Kimata M."/>
            <person name="Watanabe M."/>
            <person name="Hiraoka S."/>
            <person name="Chiba Y."/>
            <person name="Ishida S."/>
            <person name="Ono Y."/>
            <person name="Takiguchi S."/>
            <person name="Watanabe S."/>
            <person name="Yosida M."/>
            <person name="Hotuta T."/>
            <person name="Kusano J."/>
            <person name="Kanehori K."/>
            <person name="Takahashi-Fujii A."/>
            <person name="Hara H."/>
            <person name="Tanase T.-O."/>
            <person name="Nomura Y."/>
            <person name="Togiya S."/>
            <person name="Komai F."/>
            <person name="Hara R."/>
            <person name="Takeuchi K."/>
            <person name="Arita M."/>
            <person name="Imose N."/>
            <person name="Musashino K."/>
            <person name="Yuuki H."/>
            <person name="Oshima A."/>
            <person name="Sasaki N."/>
            <person name="Aotsuka S."/>
            <person name="Yoshikawa Y."/>
            <person name="Matsunawa H."/>
            <person name="Ichihara T."/>
            <person name="Shiohata N."/>
            <person name="Sano S."/>
            <person name="Moriya S."/>
            <person name="Momiyama H."/>
            <person name="Satoh N."/>
            <person name="Takami S."/>
            <person name="Terashima Y."/>
            <person name="Suzuki O."/>
            <person name="Nakagawa S."/>
            <person name="Senoh A."/>
            <person name="Mizoguchi H."/>
            <person name="Goto Y."/>
            <person name="Shimizu F."/>
            <person name="Wakebe H."/>
            <person name="Hishigaki H."/>
            <person name="Watanabe T."/>
            <person name="Sugiyama A."/>
            <person name="Takemoto M."/>
            <person name="Kawakami B."/>
            <person name="Yamazaki M."/>
            <person name="Watanabe K."/>
            <person name="Kumagai A."/>
            <person name="Itakura S."/>
            <person name="Fukuzumi Y."/>
            <person name="Fujimori Y."/>
            <person name="Komiyama M."/>
            <person name="Tashiro H."/>
            <person name="Tanigami A."/>
            <person name="Fujiwara T."/>
            <person name="Ono T."/>
            <person name="Yamada K."/>
            <person name="Fujii Y."/>
            <person name="Ozaki K."/>
            <person name="Hirao M."/>
            <person name="Ohmori Y."/>
            <person name="Kawabata A."/>
            <person name="Hikiji T."/>
            <person name="Kobatake N."/>
            <person name="Inagaki H."/>
            <person name="Ikema Y."/>
            <person name="Okamoto S."/>
            <person name="Okitani R."/>
            <person name="Kawakami T."/>
            <person name="Noguchi S."/>
            <person name="Itoh T."/>
            <person name="Shigeta K."/>
            <person name="Senba T."/>
            <person name="Matsumura K."/>
            <person name="Nakajima Y."/>
            <person name="Mizuno T."/>
            <person name="Morinaga M."/>
            <person name="Sasaki M."/>
            <person name="Togashi T."/>
            <person name="Oyama M."/>
            <person name="Hata H."/>
            <person name="Watanabe M."/>
            <person name="Komatsu T."/>
            <person name="Mizushima-Sugano J."/>
            <person name="Satoh T."/>
            <person name="Shirai Y."/>
            <person name="Takahashi Y."/>
            <person name="Nakagawa K."/>
            <person name="Okumura K."/>
            <person name="Nagase T."/>
            <person name="Nomura N."/>
            <person name="Kikuchi H."/>
            <person name="Masuho Y."/>
            <person name="Yamashita R."/>
            <person name="Nakai K."/>
            <person name="Yada T."/>
            <person name="Nakamura Y."/>
            <person name="Ohara O."/>
            <person name="Isogai T."/>
            <person name="Sugano S."/>
        </authorList>
    </citation>
    <scope>NUCLEOTIDE SEQUENCE [LARGE SCALE MRNA] OF 1449-1816 (ISOFORMS 1/2)</scope>
</reference>
<reference key="13">
    <citation type="journal article" date="2005" name="BMC Cell Biol.">
        <title>The novel protein KBP regulates mitochondria localization by interaction with a kinesin-like protein.</title>
        <authorList>
            <person name="Wozniak M.J."/>
            <person name="Melzer M."/>
            <person name="Dorner C."/>
            <person name="Haring H.U."/>
            <person name="Lammers R."/>
        </authorList>
    </citation>
    <scope>FUNCTION (ISOFORM 3)</scope>
    <scope>CATALYTIC ACTIVITY</scope>
    <scope>INTERACTION WITH KIFBP</scope>
    <scope>SUBCELLULAR LOCATION (ISOFORM 3)</scope>
    <scope>REGION</scope>
</reference>
<reference key="14">
    <citation type="journal article" date="2008" name="Genes Dev.">
        <title>The kinesin KIF1Bbeta acts downstream from EglN3 to induce apoptosis and is a potential 1p36 tumor suppressor.</title>
        <authorList>
            <person name="Schlisio S."/>
            <person name="Kenchappa R.S."/>
            <person name="Vredeveld L.C."/>
            <person name="George R.E."/>
            <person name="Stewart R."/>
            <person name="Greulich H."/>
            <person name="Shahriari K."/>
            <person name="Nguyen N.V."/>
            <person name="Pigny P."/>
            <person name="Dahia P.L."/>
            <person name="Pomeroy S.L."/>
            <person name="Maris J.M."/>
            <person name="Look A.T."/>
            <person name="Meyerson M."/>
            <person name="Peeper D.S."/>
            <person name="Carter B.D."/>
            <person name="Kaelin W.G. Jr."/>
        </authorList>
    </citation>
    <scope>FUNCTION (ISOFORM 2)</scope>
    <scope>INVOLVEMENT IN NEUROBLASTOMA AND PHEOCHROMOCYTOMA</scope>
    <scope>VARIANTS LEU-34; VAL-692; ILE-873; CYS-1133; SER-1263; ASN-1527; MET-1600 AND LYS-1674</scope>
</reference>
<reference key="15">
    <citation type="journal article" date="2008" name="Proc. Natl. Acad. Sci. U.S.A.">
        <title>A quantitative atlas of mitotic phosphorylation.</title>
        <authorList>
            <person name="Dephoure N."/>
            <person name="Zhou C."/>
            <person name="Villen J."/>
            <person name="Beausoleil S.A."/>
            <person name="Bakalarski C.E."/>
            <person name="Elledge S.J."/>
            <person name="Gygi S.P."/>
        </authorList>
    </citation>
    <scope>PHOSPHORYLATION [LARGE SCALE ANALYSIS] AT SER-1057</scope>
    <scope>IDENTIFICATION BY MASS SPECTROMETRY [LARGE SCALE ANALYSIS]</scope>
    <source>
        <tissue>Cervix carcinoma</tissue>
    </source>
</reference>
<reference key="16">
    <citation type="journal article" date="2009" name="Anal. Chem.">
        <title>Lys-N and trypsin cover complementary parts of the phosphoproteome in a refined SCX-based approach.</title>
        <authorList>
            <person name="Gauci S."/>
            <person name="Helbig A.O."/>
            <person name="Slijper M."/>
            <person name="Krijgsveld J."/>
            <person name="Heck A.J."/>
            <person name="Mohammed S."/>
        </authorList>
    </citation>
    <scope>IDENTIFICATION BY MASS SPECTROMETRY [LARGE SCALE ANALYSIS]</scope>
</reference>
<reference key="17">
    <citation type="journal article" date="2009" name="Sci. Signal.">
        <title>Quantitative phosphoproteomic analysis of T cell receptor signaling reveals system-wide modulation of protein-protein interactions.</title>
        <authorList>
            <person name="Mayya V."/>
            <person name="Lundgren D.H."/>
            <person name="Hwang S.-I."/>
            <person name="Rezaul K."/>
            <person name="Wu L."/>
            <person name="Eng J.K."/>
            <person name="Rodionov V."/>
            <person name="Han D.K."/>
        </authorList>
    </citation>
    <scope>PHOSPHORYLATION [LARGE SCALE ANALYSIS] AT THR-1075 AND SER-1487</scope>
    <scope>IDENTIFICATION BY MASS SPECTROMETRY [LARGE SCALE ANALYSIS]</scope>
    <source>
        <tissue>Leukemic T-cell</tissue>
    </source>
</reference>
<reference key="18">
    <citation type="journal article" date="2010" name="Sci. Signal.">
        <title>Quantitative phosphoproteomics reveals widespread full phosphorylation site occupancy during mitosis.</title>
        <authorList>
            <person name="Olsen J.V."/>
            <person name="Vermeulen M."/>
            <person name="Santamaria A."/>
            <person name="Kumar C."/>
            <person name="Miller M.L."/>
            <person name="Jensen L.J."/>
            <person name="Gnad F."/>
            <person name="Cox J."/>
            <person name="Jensen T.S."/>
            <person name="Nigg E.A."/>
            <person name="Brunak S."/>
            <person name="Mann M."/>
        </authorList>
    </citation>
    <scope>PHOSPHORYLATION [LARGE SCALE ANALYSIS] AT SER-1057; SER-1454; SER-1487; SER-1610 AND SER-1613</scope>
    <scope>PHOSPHORYLATION [LARGE SCALE ANALYSIS] AT SER-1141 (ISOFORM 3)</scope>
    <scope>IDENTIFICATION BY MASS SPECTROMETRY [LARGE SCALE ANALYSIS]</scope>
    <source>
        <tissue>Cervix carcinoma</tissue>
    </source>
</reference>
<reference key="19">
    <citation type="journal article" date="2011" name="BMC Syst. Biol.">
        <title>Initial characterization of the human central proteome.</title>
        <authorList>
            <person name="Burkard T.R."/>
            <person name="Planyavsky M."/>
            <person name="Kaupe I."/>
            <person name="Breitwieser F.P."/>
            <person name="Buerckstuemmer T."/>
            <person name="Bennett K.L."/>
            <person name="Superti-Furga G."/>
            <person name="Colinge J."/>
        </authorList>
    </citation>
    <scope>IDENTIFICATION BY MASS SPECTROMETRY [LARGE SCALE ANALYSIS]</scope>
</reference>
<reference key="20">
    <citation type="journal article" date="2011" name="Sci. Signal.">
        <title>System-wide temporal characterization of the proteome and phosphoproteome of human embryonic stem cell differentiation.</title>
        <authorList>
            <person name="Rigbolt K.T."/>
            <person name="Prokhorova T.A."/>
            <person name="Akimov V."/>
            <person name="Henningsen J."/>
            <person name="Johansen P.T."/>
            <person name="Kratchmarova I."/>
            <person name="Kassem M."/>
            <person name="Mann M."/>
            <person name="Olsen J.V."/>
            <person name="Blagoev B."/>
        </authorList>
    </citation>
    <scope>PHOSPHORYLATION [LARGE SCALE ANALYSIS] AT SER-663 AND SER-665 (ISOFORM 3)</scope>
    <scope>IDENTIFICATION BY MASS SPECTROMETRY [LARGE SCALE ANALYSIS]</scope>
</reference>
<reference key="21">
    <citation type="journal article" date="2012" name="Proc. Natl. Acad. Sci. U.S.A.">
        <title>N-terminal acetylome analyses and functional insights of the N-terminal acetyltransferase NatB.</title>
        <authorList>
            <person name="Van Damme P."/>
            <person name="Lasa M."/>
            <person name="Polevoda B."/>
            <person name="Gazquez C."/>
            <person name="Elosegui-Artola A."/>
            <person name="Kim D.S."/>
            <person name="De Juan-Pardo E."/>
            <person name="Demeyer K."/>
            <person name="Hole K."/>
            <person name="Larrea E."/>
            <person name="Timmerman E."/>
            <person name="Prieto J."/>
            <person name="Arnesen T."/>
            <person name="Sherman F."/>
            <person name="Gevaert K."/>
            <person name="Aldabe R."/>
        </authorList>
    </citation>
    <scope>ACETYLATION [LARGE SCALE ANALYSIS] AT SER-2</scope>
    <scope>CLEAVAGE OF INITIATOR METHIONINE [LARGE SCALE ANALYSIS]</scope>
    <scope>IDENTIFICATION BY MASS SPECTROMETRY [LARGE SCALE ANALYSIS]</scope>
</reference>
<reference key="22">
    <citation type="journal article" date="2013" name="J. Proteome Res.">
        <title>Toward a comprehensive characterization of a human cancer cell phosphoproteome.</title>
        <authorList>
            <person name="Zhou H."/>
            <person name="Di Palma S."/>
            <person name="Preisinger C."/>
            <person name="Peng M."/>
            <person name="Polat A.N."/>
            <person name="Heck A.J."/>
            <person name="Mohammed S."/>
        </authorList>
    </citation>
    <scope>PHOSPHORYLATION [LARGE SCALE ANALYSIS] AT SER-1054; SER-1057; SER-1416; SER-1454 AND SER-1487</scope>
    <scope>IDENTIFICATION BY MASS SPECTROMETRY [LARGE SCALE ANALYSIS]</scope>
    <source>
        <tissue>Cervix carcinoma</tissue>
        <tissue>Erythroleukemia</tissue>
    </source>
</reference>
<reference key="23">
    <citation type="journal article" date="2014" name="J. Proteomics">
        <title>An enzyme assisted RP-RPLC approach for in-depth analysis of human liver phosphoproteome.</title>
        <authorList>
            <person name="Bian Y."/>
            <person name="Song C."/>
            <person name="Cheng K."/>
            <person name="Dong M."/>
            <person name="Wang F."/>
            <person name="Huang J."/>
            <person name="Sun D."/>
            <person name="Wang L."/>
            <person name="Ye M."/>
            <person name="Zou H."/>
        </authorList>
    </citation>
    <scope>PHOSPHORYLATION [LARGE SCALE ANALYSIS] AT SER-1454; SER-1573; SER-1603 AND SER-1613</scope>
    <scope>PHOSPHORYLATION [LARGE SCALE ANALYSIS] AT SER-665 (ISOFORM 3)</scope>
    <scope>IDENTIFICATION BY MASS SPECTROMETRY [LARGE SCALE ANALYSIS]</scope>
    <source>
        <tissue>Liver</tissue>
    </source>
</reference>
<reference key="24">
    <citation type="journal article" date="2001" name="Cell">
        <title>Charcot-Marie-Tooth disease type 2A caused by mutation in a microtubule motor KIF1B-beta.</title>
        <authorList>
            <person name="Zhao C."/>
            <person name="Takita J."/>
            <person name="Tanaka Y."/>
            <person name="Setou M."/>
            <person name="Nakagawa T."/>
            <person name="Takeda S."/>
            <person name="Yang H.W."/>
            <person name="Terada S."/>
            <person name="Nakata T."/>
            <person name="Takei Y."/>
            <person name="Saito M."/>
            <person name="Tsuji S."/>
            <person name="Hayashi Y."/>
            <person name="Hirokawa N."/>
        </authorList>
    </citation>
    <scope>VARIANT CMT2A1 LEU-98</scope>
</reference>
<dbReference type="EC" id="5.6.1.3" evidence="22"/>
<dbReference type="EMBL" id="AX039604">
    <property type="protein sequence ID" value="CAC16629.1"/>
    <property type="molecule type" value="Genomic_DNA"/>
</dbReference>
<dbReference type="EMBL" id="AB017133">
    <property type="protein sequence ID" value="BAB69038.1"/>
    <property type="status" value="ALT_INIT"/>
    <property type="molecule type" value="mRNA"/>
</dbReference>
<dbReference type="EMBL" id="AF257176">
    <property type="protein sequence ID" value="AAK49332.1"/>
    <property type="molecule type" value="mRNA"/>
</dbReference>
<dbReference type="EMBL" id="AY043362">
    <property type="protein sequence ID" value="AAK85155.1"/>
    <property type="molecule type" value="mRNA"/>
</dbReference>
<dbReference type="EMBL" id="AB088210">
    <property type="protein sequence ID" value="BAE02543.1"/>
    <property type="molecule type" value="mRNA"/>
</dbReference>
<dbReference type="EMBL" id="AY139835">
    <property type="protein sequence ID" value="AAN17742.1"/>
    <property type="molecule type" value="mRNA"/>
</dbReference>
<dbReference type="EMBL" id="AB011163">
    <property type="protein sequence ID" value="BAA25517.2"/>
    <property type="status" value="ALT_INIT"/>
    <property type="molecule type" value="mRNA"/>
</dbReference>
<dbReference type="EMBL" id="AB040881">
    <property type="protein sequence ID" value="BAA95972.2"/>
    <property type="status" value="ALT_INIT"/>
    <property type="molecule type" value="mRNA"/>
</dbReference>
<dbReference type="EMBL" id="AL139424">
    <property type="status" value="NOT_ANNOTATED_CDS"/>
    <property type="molecule type" value="Genomic_DNA"/>
</dbReference>
<dbReference type="EMBL" id="AL358013">
    <property type="status" value="NOT_ANNOTATED_CDS"/>
    <property type="molecule type" value="Genomic_DNA"/>
</dbReference>
<dbReference type="EMBL" id="BC001415">
    <property type="protein sequence ID" value="AAH01415.1"/>
    <property type="status" value="ALT_INIT"/>
    <property type="molecule type" value="mRNA"/>
</dbReference>
<dbReference type="EMBL" id="BC115395">
    <property type="protein sequence ID" value="AAI15396.1"/>
    <property type="molecule type" value="mRNA"/>
</dbReference>
<dbReference type="EMBL" id="BT007174">
    <property type="protein sequence ID" value="AAP35838.1"/>
    <property type="status" value="ALT_INIT"/>
    <property type="molecule type" value="mRNA"/>
</dbReference>
<dbReference type="EMBL" id="AK022977">
    <property type="protein sequence ID" value="BAB14341.1"/>
    <property type="molecule type" value="mRNA"/>
</dbReference>
<dbReference type="CCDS" id="CCDS111.1">
    <molecule id="O60333-2"/>
</dbReference>
<dbReference type="CCDS" id="CCDS112.1">
    <molecule id="O60333-3"/>
</dbReference>
<dbReference type="CCDS" id="CCDS90858.1">
    <molecule id="O60333-1"/>
</dbReference>
<dbReference type="RefSeq" id="NP_001352880.1">
    <molecule id="O60333-1"/>
    <property type="nucleotide sequence ID" value="NM_001365951.3"/>
</dbReference>
<dbReference type="RefSeq" id="NP_001352881.1">
    <molecule id="O60333-1"/>
    <property type="nucleotide sequence ID" value="NM_001365952.1"/>
</dbReference>
<dbReference type="RefSeq" id="NP_001352882.1">
    <molecule id="O60333-3"/>
    <property type="nucleotide sequence ID" value="NM_001365953.1"/>
</dbReference>
<dbReference type="RefSeq" id="NP_055889.2">
    <molecule id="O60333-2"/>
    <property type="nucleotide sequence ID" value="NM_015074.3"/>
</dbReference>
<dbReference type="RefSeq" id="NP_904325.2">
    <molecule id="O60333-3"/>
    <property type="nucleotide sequence ID" value="NM_183416.3"/>
</dbReference>
<dbReference type="PDB" id="2EH0">
    <property type="method" value="NMR"/>
    <property type="chains" value="A=531-647"/>
</dbReference>
<dbReference type="PDBsum" id="2EH0"/>
<dbReference type="SMR" id="O60333"/>
<dbReference type="BioGRID" id="116723">
    <property type="interactions" value="169"/>
</dbReference>
<dbReference type="DIP" id="DIP-33015N"/>
<dbReference type="FunCoup" id="O60333">
    <property type="interactions" value="1209"/>
</dbReference>
<dbReference type="IntAct" id="O60333">
    <property type="interactions" value="357"/>
</dbReference>
<dbReference type="MINT" id="O60333"/>
<dbReference type="STRING" id="9606.ENSP00000263934"/>
<dbReference type="BindingDB" id="O60333"/>
<dbReference type="ChEMBL" id="CHEMBL5889"/>
<dbReference type="GlyCosmos" id="O60333">
    <property type="glycosylation" value="1 site, 1 glycan"/>
</dbReference>
<dbReference type="GlyGen" id="O60333">
    <property type="glycosylation" value="2 sites, 1 O-linked glycan (2 sites)"/>
</dbReference>
<dbReference type="iPTMnet" id="O60333"/>
<dbReference type="MetOSite" id="O60333"/>
<dbReference type="PhosphoSitePlus" id="O60333"/>
<dbReference type="SwissPalm" id="O60333"/>
<dbReference type="BioMuta" id="KIF1B"/>
<dbReference type="jPOST" id="O60333"/>
<dbReference type="MassIVE" id="O60333"/>
<dbReference type="PaxDb" id="9606-ENSP00000263934"/>
<dbReference type="PeptideAtlas" id="O60333"/>
<dbReference type="ProteomicsDB" id="49353">
    <molecule id="O60333-1"/>
</dbReference>
<dbReference type="ProteomicsDB" id="49354">
    <molecule id="O60333-2"/>
</dbReference>
<dbReference type="ProteomicsDB" id="49355">
    <molecule id="O60333-3"/>
</dbReference>
<dbReference type="ProteomicsDB" id="49356">
    <molecule id="O60333-4"/>
</dbReference>
<dbReference type="Pumba" id="O60333"/>
<dbReference type="Antibodypedia" id="4196">
    <property type="antibodies" value="111 antibodies from 25 providers"/>
</dbReference>
<dbReference type="DNASU" id="23095"/>
<dbReference type="Ensembl" id="ENST00000263934.10">
    <molecule id="O60333-2"/>
    <property type="protein sequence ID" value="ENSP00000263934.6"/>
    <property type="gene ID" value="ENSG00000054523.20"/>
</dbReference>
<dbReference type="Ensembl" id="ENST00000377081.5">
    <molecule id="O60333-4"/>
    <property type="protein sequence ID" value="ENSP00000366284.1"/>
    <property type="gene ID" value="ENSG00000054523.20"/>
</dbReference>
<dbReference type="Ensembl" id="ENST00000377083.5">
    <molecule id="O60333-3"/>
    <property type="protein sequence ID" value="ENSP00000366287.1"/>
    <property type="gene ID" value="ENSG00000054523.20"/>
</dbReference>
<dbReference type="Ensembl" id="ENST00000377086.5">
    <molecule id="O60333-1"/>
    <property type="protein sequence ID" value="ENSP00000366290.1"/>
    <property type="gene ID" value="ENSG00000054523.20"/>
</dbReference>
<dbReference type="Ensembl" id="ENST00000377093.9">
    <molecule id="O60333-3"/>
    <property type="protein sequence ID" value="ENSP00000366297.4"/>
    <property type="gene ID" value="ENSG00000054523.20"/>
</dbReference>
<dbReference type="Ensembl" id="ENST00000676179.1">
    <molecule id="O60333-1"/>
    <property type="protein sequence ID" value="ENSP00000502065.1"/>
    <property type="gene ID" value="ENSG00000054523.20"/>
</dbReference>
<dbReference type="GeneID" id="23095"/>
<dbReference type="KEGG" id="hsa:23095"/>
<dbReference type="MANE-Select" id="ENST00000676179.1">
    <property type="protein sequence ID" value="ENSP00000502065.1"/>
    <property type="RefSeq nucleotide sequence ID" value="NM_001365951.3"/>
    <property type="RefSeq protein sequence ID" value="NP_001352880.1"/>
</dbReference>
<dbReference type="UCSC" id="uc001aqv.5">
    <molecule id="O60333-1"/>
    <property type="organism name" value="human"/>
</dbReference>
<dbReference type="AGR" id="HGNC:16636"/>
<dbReference type="CTD" id="23095"/>
<dbReference type="DisGeNET" id="23095"/>
<dbReference type="GeneCards" id="KIF1B"/>
<dbReference type="GeneReviews" id="KIF1B"/>
<dbReference type="HGNC" id="HGNC:16636">
    <property type="gene designation" value="KIF1B"/>
</dbReference>
<dbReference type="HPA" id="ENSG00000054523">
    <property type="expression patterns" value="Group enriched (bone marrow, brain, retina, skeletal muscle, tongue)"/>
</dbReference>
<dbReference type="MalaCards" id="KIF1B"/>
<dbReference type="MIM" id="118210">
    <property type="type" value="phenotype"/>
</dbReference>
<dbReference type="MIM" id="171300">
    <property type="type" value="phenotype"/>
</dbReference>
<dbReference type="MIM" id="256700">
    <property type="type" value="phenotype"/>
</dbReference>
<dbReference type="MIM" id="605995">
    <property type="type" value="gene"/>
</dbReference>
<dbReference type="neXtProt" id="NX_O60333"/>
<dbReference type="OpenTargets" id="ENSG00000054523"/>
<dbReference type="Orphanet" id="99946">
    <property type="disease" value="Autosomal dominant Charcot-Marie-Tooth disease type 2A1"/>
</dbReference>
<dbReference type="Orphanet" id="29072">
    <property type="disease" value="Hereditary pheochromocytoma-paraganglioma"/>
</dbReference>
<dbReference type="PharmGKB" id="PA38176"/>
<dbReference type="VEuPathDB" id="HostDB:ENSG00000054523"/>
<dbReference type="eggNOG" id="KOG0245">
    <property type="taxonomic scope" value="Eukaryota"/>
</dbReference>
<dbReference type="GeneTree" id="ENSGT00940000157445"/>
<dbReference type="HOGENOM" id="CLU_009645_0_0_1"/>
<dbReference type="InParanoid" id="O60333"/>
<dbReference type="OMA" id="IKITICH"/>
<dbReference type="OrthoDB" id="3176171at2759"/>
<dbReference type="PAN-GO" id="O60333">
    <property type="GO annotations" value="11 GO annotations based on evolutionary models"/>
</dbReference>
<dbReference type="PhylomeDB" id="O60333"/>
<dbReference type="TreeFam" id="TF105221"/>
<dbReference type="PathwayCommons" id="O60333"/>
<dbReference type="Reactome" id="R-HSA-6811434">
    <property type="pathway name" value="COPI-dependent Golgi-to-ER retrograde traffic"/>
</dbReference>
<dbReference type="Reactome" id="R-HSA-983189">
    <property type="pathway name" value="Kinesins"/>
</dbReference>
<dbReference type="SignaLink" id="O60333"/>
<dbReference type="SIGNOR" id="O60333"/>
<dbReference type="BioGRID-ORCS" id="23095">
    <property type="hits" value="9 hits in 1154 CRISPR screens"/>
</dbReference>
<dbReference type="CD-CODE" id="232F8A39">
    <property type="entry name" value="P-body"/>
</dbReference>
<dbReference type="CD-CODE" id="DEE660B4">
    <property type="entry name" value="Stress granule"/>
</dbReference>
<dbReference type="CD-CODE" id="FB4E32DD">
    <property type="entry name" value="Presynaptic clusters and postsynaptic densities"/>
</dbReference>
<dbReference type="ChiTaRS" id="KIF1B">
    <property type="organism name" value="human"/>
</dbReference>
<dbReference type="EvolutionaryTrace" id="O60333"/>
<dbReference type="GeneWiki" id="KIF1B"/>
<dbReference type="GenomeRNAi" id="23095"/>
<dbReference type="Pharos" id="O60333">
    <property type="development level" value="Tbio"/>
</dbReference>
<dbReference type="PRO" id="PR:O60333"/>
<dbReference type="Proteomes" id="UP000005640">
    <property type="component" value="Chromosome 1"/>
</dbReference>
<dbReference type="RNAct" id="O60333">
    <property type="molecule type" value="protein"/>
</dbReference>
<dbReference type="Bgee" id="ENSG00000054523">
    <property type="expression patterns" value="Expressed in skeletal muscle tissue of rectus abdominis and 200 other cell types or tissues"/>
</dbReference>
<dbReference type="ExpressionAtlas" id="O60333">
    <property type="expression patterns" value="baseline and differential"/>
</dbReference>
<dbReference type="GO" id="GO:0030424">
    <property type="term" value="C:axon"/>
    <property type="evidence" value="ECO:0000318"/>
    <property type="project" value="GO_Central"/>
</dbReference>
<dbReference type="GO" id="GO:1904115">
    <property type="term" value="C:axon cytoplasm"/>
    <property type="evidence" value="ECO:0007669"/>
    <property type="project" value="GOC"/>
</dbReference>
<dbReference type="GO" id="GO:0005737">
    <property type="term" value="C:cytoplasm"/>
    <property type="evidence" value="ECO:0000318"/>
    <property type="project" value="GO_Central"/>
</dbReference>
<dbReference type="GO" id="GO:0031410">
    <property type="term" value="C:cytoplasmic vesicle"/>
    <property type="evidence" value="ECO:0000250"/>
    <property type="project" value="UniProtKB"/>
</dbReference>
<dbReference type="GO" id="GO:0030425">
    <property type="term" value="C:dendrite"/>
    <property type="evidence" value="ECO:0000318"/>
    <property type="project" value="GO_Central"/>
</dbReference>
<dbReference type="GO" id="GO:0005871">
    <property type="term" value="C:kinesin complex"/>
    <property type="evidence" value="ECO:0000318"/>
    <property type="project" value="GO_Central"/>
</dbReference>
<dbReference type="GO" id="GO:0005874">
    <property type="term" value="C:microtubule"/>
    <property type="evidence" value="ECO:0000318"/>
    <property type="project" value="GO_Central"/>
</dbReference>
<dbReference type="GO" id="GO:0005739">
    <property type="term" value="C:mitochondrion"/>
    <property type="evidence" value="ECO:0000314"/>
    <property type="project" value="UniProtKB"/>
</dbReference>
<dbReference type="GO" id="GO:0043005">
    <property type="term" value="C:neuron projection"/>
    <property type="evidence" value="ECO:0000250"/>
    <property type="project" value="UniProtKB"/>
</dbReference>
<dbReference type="GO" id="GO:0098794">
    <property type="term" value="C:postsynapse"/>
    <property type="evidence" value="ECO:0007669"/>
    <property type="project" value="Ensembl"/>
</dbReference>
<dbReference type="GO" id="GO:0030672">
    <property type="term" value="C:synaptic vesicle membrane"/>
    <property type="evidence" value="ECO:0000250"/>
    <property type="project" value="UniProtKB"/>
</dbReference>
<dbReference type="GO" id="GO:0005524">
    <property type="term" value="F:ATP binding"/>
    <property type="evidence" value="ECO:0007669"/>
    <property type="project" value="UniProtKB-KW"/>
</dbReference>
<dbReference type="GO" id="GO:0016887">
    <property type="term" value="F:ATP hydrolysis activity"/>
    <property type="evidence" value="ECO:0000318"/>
    <property type="project" value="GO_Central"/>
</dbReference>
<dbReference type="GO" id="GO:0019894">
    <property type="term" value="F:kinesin binding"/>
    <property type="evidence" value="ECO:0000304"/>
    <property type="project" value="UniProtKB"/>
</dbReference>
<dbReference type="GO" id="GO:0008017">
    <property type="term" value="F:microtubule binding"/>
    <property type="evidence" value="ECO:0000318"/>
    <property type="project" value="GO_Central"/>
</dbReference>
<dbReference type="GO" id="GO:0008574">
    <property type="term" value="F:plus-end-directed microtubule motor activity"/>
    <property type="evidence" value="ECO:0000314"/>
    <property type="project" value="UniProtKB"/>
</dbReference>
<dbReference type="GO" id="GO:0048490">
    <property type="term" value="P:anterograde synaptic vesicle transport"/>
    <property type="evidence" value="ECO:0000250"/>
    <property type="project" value="UniProtKB"/>
</dbReference>
<dbReference type="GO" id="GO:0006915">
    <property type="term" value="P:apoptotic process"/>
    <property type="evidence" value="ECO:0007669"/>
    <property type="project" value="UniProtKB-KW"/>
</dbReference>
<dbReference type="GO" id="GO:1902742">
    <property type="term" value="P:apoptotic process involved in development"/>
    <property type="evidence" value="ECO:0000315"/>
    <property type="project" value="UniProtKB"/>
</dbReference>
<dbReference type="GO" id="GO:0047497">
    <property type="term" value="P:mitochondrion transport along microtubule"/>
    <property type="evidence" value="ECO:0000315"/>
    <property type="project" value="UniProtKB"/>
</dbReference>
<dbReference type="GO" id="GO:0007274">
    <property type="term" value="P:neuromuscular synaptic transmission"/>
    <property type="evidence" value="ECO:0000250"/>
    <property type="project" value="UniProtKB"/>
</dbReference>
<dbReference type="GO" id="GO:0007270">
    <property type="term" value="P:neuron-neuron synaptic transmission"/>
    <property type="evidence" value="ECO:0000250"/>
    <property type="project" value="UniProtKB"/>
</dbReference>
<dbReference type="GO" id="GO:1990049">
    <property type="term" value="P:retrograde neuronal dense core vesicle transport"/>
    <property type="evidence" value="ECO:0000318"/>
    <property type="project" value="GO_Central"/>
</dbReference>
<dbReference type="GO" id="GO:0016192">
    <property type="term" value="P:vesicle-mediated transport"/>
    <property type="evidence" value="ECO:0000318"/>
    <property type="project" value="GO_Central"/>
</dbReference>
<dbReference type="CDD" id="cd22727">
    <property type="entry name" value="FHA_KIF1B"/>
    <property type="match status" value="1"/>
</dbReference>
<dbReference type="CDD" id="cd01365">
    <property type="entry name" value="KISc_KIF1A_KIF1B"/>
    <property type="match status" value="1"/>
</dbReference>
<dbReference type="CDD" id="cd01233">
    <property type="entry name" value="PH_KIFIA_KIFIB"/>
    <property type="match status" value="1"/>
</dbReference>
<dbReference type="FunFam" id="2.30.29.30:FF:000023">
    <property type="entry name" value="Kinesin family member 1B"/>
    <property type="match status" value="1"/>
</dbReference>
<dbReference type="FunFam" id="2.60.200.20:FF:000001">
    <property type="entry name" value="Kinesin family member 1B"/>
    <property type="match status" value="1"/>
</dbReference>
<dbReference type="FunFam" id="3.40.850.10:FF:000004">
    <property type="entry name" value="Kinesin-like protein isoform 2"/>
    <property type="match status" value="1"/>
</dbReference>
<dbReference type="Gene3D" id="2.60.200.20">
    <property type="match status" value="1"/>
</dbReference>
<dbReference type="Gene3D" id="6.10.250.2520">
    <property type="match status" value="1"/>
</dbReference>
<dbReference type="Gene3D" id="3.40.850.10">
    <property type="entry name" value="Kinesin motor domain"/>
    <property type="match status" value="1"/>
</dbReference>
<dbReference type="Gene3D" id="2.30.29.30">
    <property type="entry name" value="Pleckstrin-homology domain (PH domain)/Phosphotyrosine-binding domain (PTB)"/>
    <property type="match status" value="1"/>
</dbReference>
<dbReference type="InterPro" id="IPR000253">
    <property type="entry name" value="FHA_dom"/>
</dbReference>
<dbReference type="InterPro" id="IPR022164">
    <property type="entry name" value="Kinesin-like"/>
</dbReference>
<dbReference type="InterPro" id="IPR022140">
    <property type="entry name" value="Kinesin-like_KIF1-typ"/>
</dbReference>
<dbReference type="InterPro" id="IPR032405">
    <property type="entry name" value="Kinesin_assoc"/>
</dbReference>
<dbReference type="InterPro" id="IPR019821">
    <property type="entry name" value="Kinesin_motor_CS"/>
</dbReference>
<dbReference type="InterPro" id="IPR001752">
    <property type="entry name" value="Kinesin_motor_dom"/>
</dbReference>
<dbReference type="InterPro" id="IPR036961">
    <property type="entry name" value="Kinesin_motor_dom_sf"/>
</dbReference>
<dbReference type="InterPro" id="IPR027417">
    <property type="entry name" value="P-loop_NTPase"/>
</dbReference>
<dbReference type="InterPro" id="IPR011993">
    <property type="entry name" value="PH-like_dom_sf"/>
</dbReference>
<dbReference type="InterPro" id="IPR001849">
    <property type="entry name" value="PH_domain"/>
</dbReference>
<dbReference type="InterPro" id="IPR049780">
    <property type="entry name" value="PH_KIFIA_KIFIB"/>
</dbReference>
<dbReference type="InterPro" id="IPR008984">
    <property type="entry name" value="SMAD_FHA_dom_sf"/>
</dbReference>
<dbReference type="PANTHER" id="PTHR47117:SF4">
    <property type="entry name" value="KINESIN-LIKE PROTEIN KIF1B ISOFORM X1"/>
    <property type="match status" value="1"/>
</dbReference>
<dbReference type="PANTHER" id="PTHR47117">
    <property type="entry name" value="STAR-RELATED LIPID TRANSFER PROTEIN 9"/>
    <property type="match status" value="1"/>
</dbReference>
<dbReference type="Pfam" id="PF12473">
    <property type="entry name" value="DUF3694"/>
    <property type="match status" value="1"/>
</dbReference>
<dbReference type="Pfam" id="PF00498">
    <property type="entry name" value="FHA"/>
    <property type="match status" value="1"/>
</dbReference>
<dbReference type="Pfam" id="PF12423">
    <property type="entry name" value="KIF1B"/>
    <property type="match status" value="1"/>
</dbReference>
<dbReference type="Pfam" id="PF00225">
    <property type="entry name" value="Kinesin"/>
    <property type="match status" value="1"/>
</dbReference>
<dbReference type="Pfam" id="PF16183">
    <property type="entry name" value="Kinesin_assoc"/>
    <property type="match status" value="1"/>
</dbReference>
<dbReference type="Pfam" id="PF00169">
    <property type="entry name" value="PH"/>
    <property type="match status" value="1"/>
</dbReference>
<dbReference type="PRINTS" id="PR00380">
    <property type="entry name" value="KINESINHEAVY"/>
</dbReference>
<dbReference type="SMART" id="SM00240">
    <property type="entry name" value="FHA"/>
    <property type="match status" value="1"/>
</dbReference>
<dbReference type="SMART" id="SM00129">
    <property type="entry name" value="KISc"/>
    <property type="match status" value="1"/>
</dbReference>
<dbReference type="SMART" id="SM00233">
    <property type="entry name" value="PH"/>
    <property type="match status" value="1"/>
</dbReference>
<dbReference type="SUPFAM" id="SSF52540">
    <property type="entry name" value="P-loop containing nucleoside triphosphate hydrolases"/>
    <property type="match status" value="1"/>
</dbReference>
<dbReference type="SUPFAM" id="SSF50729">
    <property type="entry name" value="PH domain-like"/>
    <property type="match status" value="1"/>
</dbReference>
<dbReference type="SUPFAM" id="SSF49879">
    <property type="entry name" value="SMAD/FHA domain"/>
    <property type="match status" value="1"/>
</dbReference>
<dbReference type="PROSITE" id="PS50006">
    <property type="entry name" value="FHA_DOMAIN"/>
    <property type="match status" value="1"/>
</dbReference>
<dbReference type="PROSITE" id="PS00411">
    <property type="entry name" value="KINESIN_MOTOR_1"/>
    <property type="match status" value="1"/>
</dbReference>
<dbReference type="PROSITE" id="PS50067">
    <property type="entry name" value="KINESIN_MOTOR_2"/>
    <property type="match status" value="1"/>
</dbReference>
<dbReference type="PROSITE" id="PS50003">
    <property type="entry name" value="PH_DOMAIN"/>
    <property type="match status" value="1"/>
</dbReference>
<comment type="function">
    <text evidence="12">Has a plus-end-directed microtubule motor activity and functions as a motor for transport of vesicles and organelles along microtubules.</text>
</comment>
<comment type="function">
    <molecule>Isoform 2</molecule>
    <text evidence="2 13">Has a plus-end-directed microtubule motor activity and functions as a motor for anterograde synaptic vesicle transport along axonal microtubules from the cell body to the presynapse in neuronal cells (By similarity). Functions as a downstream effector in a developmental apoptotic pathway that is activated when nerve growth factor (NGF) becomes limiting for neuronal progenitor cells (PubMed:18334619).</text>
</comment>
<comment type="function">
    <molecule>Isoform 3</molecule>
    <text evidence="12">Has a plus-end-directed microtubule motor activity and functions as a motor for anterograde transport of mitochondria.</text>
</comment>
<comment type="catalytic activity">
    <reaction evidence="22">
        <text>ATP + H2O + a kinesin associated with a microtubule at position (n) = ADP + phosphate a kinesin associated with a microtubule at position (n+1, toward the plus end).</text>
        <dbReference type="EC" id="5.6.1.3"/>
    </reaction>
</comment>
<comment type="subunit">
    <text evidence="1 2 12">Monomer (By similarity). Interacts with KIFBP; positively regulates KIF1B microtubule motor activity (PubMed:16225668). Interacts (via C-terminus end of the kinesin-motor domain) with CHP1; the interaction occurs in a calcium-dependent manner (By similarity).</text>
</comment>
<comment type="subunit">
    <molecule>Isoform 2</molecule>
    <text evidence="2">Interacts with MADD (via death domain); links this isoform to Rab3-carrying vesicles in anterograde synaptic vesicle transport.</text>
</comment>
<comment type="interaction">
    <interactant intactId="EBI-465633">
        <id>O60333</id>
    </interactant>
    <interactant intactId="EBI-913476">
        <id>Q7Z460</id>
        <label>CLASP1</label>
    </interactant>
    <organismsDiffer>false</organismsDiffer>
    <experiments>3</experiments>
</comment>
<comment type="interaction">
    <interactant intactId="EBI-465633">
        <id>O60333</id>
    </interactant>
    <interactant intactId="EBI-476295">
        <id>P31947</id>
        <label>SFN</label>
    </interactant>
    <organismsDiffer>false</organismsDiffer>
    <experiments>4</experiments>
</comment>
<comment type="interaction">
    <interactant intactId="EBI-465633">
        <id>O60333</id>
    </interactant>
    <interactant intactId="EBI-747107">
        <id>Q8IUQ4</id>
        <label>SIAH1</label>
    </interactant>
    <organismsDiffer>false</organismsDiffer>
    <experiments>3</experiments>
</comment>
<comment type="interaction">
    <interactant intactId="EBI-465633">
        <id>O60333</id>
    </interactant>
    <interactant intactId="EBI-356498">
        <id>P62258</id>
        <label>YWHAE</label>
    </interactant>
    <organismsDiffer>false</organismsDiffer>
    <experiments>6</experiments>
</comment>
<comment type="interaction">
    <interactant intactId="EBI-10975473">
        <id>O60333-2</id>
    </interactant>
    <interactant intactId="EBI-10173507">
        <id>Q6UY14-3</id>
        <label>ADAMTSL4</label>
    </interactant>
    <organismsDiffer>false</organismsDiffer>
    <experiments>3</experiments>
</comment>
<comment type="interaction">
    <interactant intactId="EBI-10975473">
        <id>O60333-2</id>
    </interactant>
    <interactant intactId="EBI-1223922">
        <id>P20933</id>
        <label>AGA</label>
    </interactant>
    <organismsDiffer>false</organismsDiffer>
    <experiments>3</experiments>
</comment>
<comment type="interaction">
    <interactant intactId="EBI-10975473">
        <id>O60333-2</id>
    </interactant>
    <interactant intactId="EBI-25840993">
        <id>Q6ZTN6-2</id>
        <label>ANKRD13D</label>
    </interactant>
    <organismsDiffer>false</organismsDiffer>
    <experiments>3</experiments>
</comment>
<comment type="interaction">
    <interactant intactId="EBI-10975473">
        <id>O60333-2</id>
    </interactant>
    <interactant intactId="EBI-762428">
        <id>Q92688</id>
        <label>ANP32B</label>
    </interactant>
    <organismsDiffer>false</organismsDiffer>
    <experiments>3</experiments>
</comment>
<comment type="interaction">
    <interactant intactId="EBI-10975473">
        <id>O60333-2</id>
    </interactant>
    <interactant intactId="EBI-2556915">
        <id>P13928</id>
        <label>ANXA8</label>
    </interactant>
    <organismsDiffer>false</organismsDiffer>
    <experiments>3</experiments>
</comment>
<comment type="interaction">
    <interactant intactId="EBI-10975473">
        <id>O60333-2</id>
    </interactant>
    <interactant intactId="EBI-77613">
        <id>P05067</id>
        <label>APP</label>
    </interactant>
    <organismsDiffer>false</organismsDiffer>
    <experiments>3</experiments>
</comment>
<comment type="interaction">
    <interactant intactId="EBI-10975473">
        <id>O60333-2</id>
    </interactant>
    <interactant intactId="EBI-19124986">
        <id>O94778</id>
        <label>AQP8</label>
    </interactant>
    <organismsDiffer>false</organismsDiffer>
    <experiments>3</experiments>
</comment>
<comment type="interaction">
    <interactant intactId="EBI-10975473">
        <id>O60333-2</id>
    </interactant>
    <interactant intactId="EBI-25844820">
        <id>Q86TN1</id>
        <label>ARNT2</label>
    </interactant>
    <organismsDiffer>false</organismsDiffer>
    <experiments>3</experiments>
</comment>
<comment type="interaction">
    <interactant intactId="EBI-10975473">
        <id>O60333-2</id>
    </interactant>
    <interactant intactId="EBI-14199987">
        <id>Q9Y575-3</id>
        <label>ASB3</label>
    </interactant>
    <organismsDiffer>false</organismsDiffer>
    <experiments>3</experiments>
</comment>
<comment type="interaction">
    <interactant intactId="EBI-10975473">
        <id>O60333-2</id>
    </interactant>
    <interactant intactId="EBI-745641">
        <id>Q96DX5</id>
        <label>ASB9</label>
    </interactant>
    <organismsDiffer>false</organismsDiffer>
    <experiments>3</experiments>
</comment>
<comment type="interaction">
    <interactant intactId="EBI-10975473">
        <id>O60333-2</id>
    </interactant>
    <interactant intactId="EBI-25843552">
        <id>Q96DX5-3</id>
        <label>ASB9</label>
    </interactant>
    <organismsDiffer>false</organismsDiffer>
    <experiments>3</experiments>
</comment>
<comment type="interaction">
    <interactant intactId="EBI-10975473">
        <id>O60333-2</id>
    </interactant>
    <interactant intactId="EBI-10254793">
        <id>Q6XD76</id>
        <label>ASCL4</label>
    </interactant>
    <organismsDiffer>false</organismsDiffer>
    <experiments>3</experiments>
</comment>
<comment type="interaction">
    <interactant intactId="EBI-10975473">
        <id>O60333-2</id>
    </interactant>
    <interactant intactId="EBI-9089489">
        <id>Q96FT7-4</id>
        <label>ASIC4</label>
    </interactant>
    <organismsDiffer>false</organismsDiffer>
    <experiments>3</experiments>
</comment>
<comment type="interaction">
    <interactant intactId="EBI-10975473">
        <id>O60333-2</id>
    </interactant>
    <interactant intactId="EBI-1048913">
        <id>Q9H0Y0</id>
        <label>ATG10</label>
    </interactant>
    <organismsDiffer>false</organismsDiffer>
    <experiments>3</experiments>
</comment>
<comment type="interaction">
    <interactant intactId="EBI-10975473">
        <id>O60333-2</id>
    </interactant>
    <interactant intactId="EBI-2891281">
        <id>P15313</id>
        <label>ATP6V1B1</label>
    </interactant>
    <organismsDiffer>false</organismsDiffer>
    <experiments>3</experiments>
</comment>
<comment type="interaction">
    <interactant intactId="EBI-10975473">
        <id>O60333-2</id>
    </interactant>
    <interactant intactId="EBI-10988864">
        <id>P46379-2</id>
        <label>BAG6</label>
    </interactant>
    <organismsDiffer>false</organismsDiffer>
    <experiments>3</experiments>
</comment>
<comment type="interaction">
    <interactant intactId="EBI-10975473">
        <id>O60333-2</id>
    </interactant>
    <interactant intactId="EBI-9092016">
        <id>Q9UQB8-6</id>
        <label>BAIAP2</label>
    </interactant>
    <organismsDiffer>false</organismsDiffer>
    <experiments>3</experiments>
</comment>
<comment type="interaction">
    <interactant intactId="EBI-10975473">
        <id>O60333-2</id>
    </interactant>
    <interactant intactId="EBI-519866">
        <id>Q16611</id>
        <label>BAK1</label>
    </interactant>
    <organismsDiffer>false</organismsDiffer>
    <experiments>3</experiments>
</comment>
<comment type="interaction">
    <interactant intactId="EBI-10975473">
        <id>O60333-2</id>
    </interactant>
    <interactant intactId="EBI-4280811">
        <id>Q8IXM2</id>
        <label>BAP18</label>
    </interactant>
    <organismsDiffer>false</organismsDiffer>
    <experiments>3</experiments>
</comment>
<comment type="interaction">
    <interactant intactId="EBI-10975473">
        <id>O60333-2</id>
    </interactant>
    <interactant intactId="EBI-749503">
        <id>Q16520</id>
        <label>BATF</label>
    </interactant>
    <organismsDiffer>false</organismsDiffer>
    <experiments>3</experiments>
</comment>
<comment type="interaction">
    <interactant intactId="EBI-10975473">
        <id>O60333-2</id>
    </interactant>
    <interactant intactId="EBI-747430">
        <id>Q9BXK5</id>
        <label>BCL2L13</label>
    </interactant>
    <organismsDiffer>false</organismsDiffer>
    <experiments>3</experiments>
</comment>
<comment type="interaction">
    <interactant intactId="EBI-10975473">
        <id>O60333-2</id>
    </interactant>
    <interactant intactId="EBI-949378">
        <id>Q14457</id>
        <label>BECN1</label>
    </interactant>
    <organismsDiffer>false</organismsDiffer>
    <experiments>3</experiments>
</comment>
<comment type="interaction">
    <interactant intactId="EBI-10975473">
        <id>O60333-2</id>
    </interactant>
    <interactant intactId="EBI-3919268">
        <id>Q96LC9</id>
        <label>BMF</label>
    </interactant>
    <organismsDiffer>false</organismsDiffer>
    <experiments>3</experiments>
</comment>
<comment type="interaction">
    <interactant intactId="EBI-10975473">
        <id>O60333-2</id>
    </interactant>
    <interactant intactId="EBI-2837444">
        <id>Q8WUW1</id>
        <label>BRK1</label>
    </interactant>
    <organismsDiffer>false</organismsDiffer>
    <experiments>3</experiments>
</comment>
<comment type="interaction">
    <interactant intactId="EBI-10975473">
        <id>O60333-2</id>
    </interactant>
    <interactant intactId="EBI-741210">
        <id>Q0VDD7</id>
        <label>BRME1</label>
    </interactant>
    <organismsDiffer>false</organismsDiffer>
    <experiments>3</experiments>
</comment>
<comment type="interaction">
    <interactant intactId="EBI-10975473">
        <id>O60333-2</id>
    </interactant>
    <interactant intactId="EBI-10693038">
        <id>Q9NSI6-4</id>
        <label>BRWD1</label>
    </interactant>
    <organismsDiffer>false</organismsDiffer>
    <experiments>3</experiments>
</comment>
<comment type="interaction">
    <interactant intactId="EBI-10975473">
        <id>O60333-2</id>
    </interactant>
    <interactant intactId="EBI-25849710">
        <id>Q9H0W9-4</id>
        <label>C11orf54</label>
    </interactant>
    <organismsDiffer>false</organismsDiffer>
    <experiments>3</experiments>
</comment>
<comment type="interaction">
    <interactant intactId="EBI-10975473">
        <id>O60333-2</id>
    </interactant>
    <interactant intactId="EBI-747505">
        <id>Q8TAB5</id>
        <label>C1orf216</label>
    </interactant>
    <organismsDiffer>false</organismsDiffer>
    <experiments>3</experiments>
</comment>
<comment type="interaction">
    <interactant intactId="EBI-10975473">
        <id>O60333-2</id>
    </interactant>
    <interactant intactId="EBI-751596">
        <id>Q96LL4</id>
        <label>C8orf48</label>
    </interactant>
    <organismsDiffer>false</organismsDiffer>
    <experiments>3</experiments>
</comment>
<comment type="interaction">
    <interactant intactId="EBI-10975473">
        <id>O60333-2</id>
    </interactant>
    <interactant intactId="EBI-3920838">
        <id>Q96NX5</id>
        <label>CAMK1G</label>
    </interactant>
    <organismsDiffer>false</organismsDiffer>
    <experiments>3</experiments>
</comment>
<comment type="interaction">
    <interactant intactId="EBI-10975473">
        <id>O60333-2</id>
    </interactant>
    <interactant intactId="EBI-25850646">
        <id>Q8N5S9-2</id>
        <label>CAMKK1</label>
    </interactant>
    <organismsDiffer>false</organismsDiffer>
    <experiments>3</experiments>
</comment>
<comment type="interaction">
    <interactant intactId="EBI-10975473">
        <id>O60333-2</id>
    </interactant>
    <interactant intactId="EBI-49119542">
        <id>Q6ZP82-1</id>
        <label>CCDC141</label>
    </interactant>
    <organismsDiffer>false</organismsDiffer>
    <experiments>3</experiments>
</comment>
<comment type="interaction">
    <interactant intactId="EBI-10975473">
        <id>O60333-2</id>
    </interactant>
    <interactant intactId="EBI-12165781">
        <id>Q96LX7-5</id>
        <label>CCDC17</label>
    </interactant>
    <organismsDiffer>false</organismsDiffer>
    <experiments>3</experiments>
</comment>
<comment type="interaction">
    <interactant intactId="EBI-10975473">
        <id>O60333-2</id>
    </interactant>
    <interactant intactId="EBI-10181422">
        <id>A0A1B0GWI1</id>
        <label>CCDC196</label>
    </interactant>
    <organismsDiffer>false</organismsDiffer>
    <experiments>3</experiments>
</comment>
<comment type="interaction">
    <interactant intactId="EBI-10975473">
        <id>O60333-2</id>
    </interactant>
    <interactant intactId="EBI-2557532">
        <id>Q9Y3X0</id>
        <label>CCDC9</label>
    </interactant>
    <organismsDiffer>false</organismsDiffer>
    <experiments>3</experiments>
</comment>
<comment type="interaction">
    <interactant intactId="EBI-10975473">
        <id>O60333-2</id>
    </interactant>
    <interactant intactId="EBI-396137">
        <id>Q9UJX2</id>
        <label>CDC23</label>
    </interactant>
    <organismsDiffer>false</organismsDiffer>
    <experiments>3</experiments>
</comment>
<comment type="interaction">
    <interactant intactId="EBI-10975473">
        <id>O60333-2</id>
    </interactant>
    <interactant intactId="EBI-11953200">
        <id>Q494V2-2</id>
        <label>CFAP100</label>
    </interactant>
    <organismsDiffer>false</organismsDiffer>
    <experiments>3</experiments>
</comment>
<comment type="interaction">
    <interactant intactId="EBI-10975473">
        <id>O60333-2</id>
    </interactant>
    <interactant intactId="EBI-744045">
        <id>Q9Y3D0</id>
        <label>CIAO2B</label>
    </interactant>
    <organismsDiffer>false</organismsDiffer>
    <experiments>3</experiments>
</comment>
<comment type="interaction">
    <interactant intactId="EBI-10975473">
        <id>O60333-2</id>
    </interactant>
    <interactant intactId="EBI-1171113">
        <id>Q14677</id>
        <label>CLINT1</label>
    </interactant>
    <organismsDiffer>false</organismsDiffer>
    <experiments>3</experiments>
</comment>
<comment type="interaction">
    <interactant intactId="EBI-10975473">
        <id>O60333-2</id>
    </interactant>
    <interactant intactId="EBI-12823145">
        <id>Q96DZ5</id>
        <label>CLIP3</label>
    </interactant>
    <organismsDiffer>false</organismsDiffer>
    <experiments>3</experiments>
</comment>
<comment type="interaction">
    <interactant intactId="EBI-10975473">
        <id>O60333-2</id>
    </interactant>
    <interactant intactId="EBI-25836090">
        <id>Q6PJW8-3</id>
        <label>CNST</label>
    </interactant>
    <organismsDiffer>false</organismsDiffer>
    <experiments>3</experiments>
</comment>
<comment type="interaction">
    <interactant intactId="EBI-10975473">
        <id>O60333-2</id>
    </interactant>
    <interactant intactId="EBI-720875">
        <id>Q96MW5</id>
        <label>COG8</label>
    </interactant>
    <organismsDiffer>false</organismsDiffer>
    <experiments>3</experiments>
</comment>
<comment type="interaction">
    <interactant intactId="EBI-10975473">
        <id>O60333-2</id>
    </interactant>
    <interactant intactId="EBI-2872414">
        <id>Q8IUI8</id>
        <label>CRLF3</label>
    </interactant>
    <organismsDiffer>false</organismsDiffer>
    <experiments>3</experiments>
</comment>
<comment type="interaction">
    <interactant intactId="EBI-10975473">
        <id>O60333-2</id>
    </interactant>
    <interactant intactId="EBI-6875961">
        <id>P02489</id>
        <label>CRYAA</label>
    </interactant>
    <organismsDiffer>false</organismsDiffer>
    <experiments>3</experiments>
</comment>
<comment type="interaction">
    <interactant intactId="EBI-10975473">
        <id>O60333-2</id>
    </interactant>
    <interactant intactId="EBI-12024320">
        <id>Q8TB03</id>
        <label>CXorf38</label>
    </interactant>
    <organismsDiffer>false</organismsDiffer>
    <experiments>3</experiments>
</comment>
<comment type="interaction">
    <interactant intactId="EBI-10975473">
        <id>O60333-2</id>
    </interactant>
    <interactant intactId="EBI-1047284">
        <id>P00167</id>
        <label>CYB5A</label>
    </interactant>
    <organismsDiffer>false</organismsDiffer>
    <experiments>3</experiments>
</comment>
<comment type="interaction">
    <interactant intactId="EBI-10975473">
        <id>O60333-2</id>
    </interactant>
    <interactant intactId="EBI-1048143">
        <id>Q7L576</id>
        <label>CYFIP1</label>
    </interactant>
    <organismsDiffer>false</organismsDiffer>
    <experiments>3</experiments>
</comment>
<comment type="interaction">
    <interactant intactId="EBI-10975473">
        <id>O60333-2</id>
    </interactant>
    <interactant intactId="EBI-25842815">
        <id>Q5TAQ9-2</id>
        <label>DCAF8</label>
    </interactant>
    <organismsDiffer>false</organismsDiffer>
    <experiments>3</experiments>
</comment>
<comment type="interaction">
    <interactant intactId="EBI-10975473">
        <id>O60333-2</id>
    </interactant>
    <interactant intactId="EBI-25842538">
        <id>Q8NDP9</id>
        <label>DKFZp547K2416</label>
    </interactant>
    <organismsDiffer>false</organismsDiffer>
    <experiments>3</experiments>
</comment>
<comment type="interaction">
    <interactant intactId="EBI-10975473">
        <id>O60333-2</id>
    </interactant>
    <interactant intactId="EBI-12019838">
        <id>Q9P1A6-3</id>
        <label>DLGAP2</label>
    </interactant>
    <organismsDiffer>false</organismsDiffer>
    <experiments>3</experiments>
</comment>
<comment type="interaction">
    <interactant intactId="EBI-10975473">
        <id>O60333-2</id>
    </interactant>
    <interactant intactId="EBI-3939812">
        <id>Q5VZB9</id>
        <label>DMRTA1</label>
    </interactant>
    <organismsDiffer>false</organismsDiffer>
    <experiments>3</experiments>
</comment>
<comment type="interaction">
    <interactant intactId="EBI-10975473">
        <id>O60333-2</id>
    </interactant>
    <interactant intactId="EBI-10694655">
        <id>Q7L591-3</id>
        <label>DOK3</label>
    </interactant>
    <organismsDiffer>false</organismsDiffer>
    <experiments>3</experiments>
</comment>
<comment type="interaction">
    <interactant intactId="EBI-10975473">
        <id>O60333-2</id>
    </interactant>
    <interactant intactId="EBI-719542">
        <id>O14531</id>
        <label>DPYSL4</label>
    </interactant>
    <organismsDiffer>false</organismsDiffer>
    <experiments>3</experiments>
</comment>
<comment type="interaction">
    <interactant intactId="EBI-10975473">
        <id>O60333-2</id>
    </interactant>
    <interactant intactId="EBI-724653">
        <id>Q9BPU6</id>
        <label>DPYSL5</label>
    </interactant>
    <organismsDiffer>false</organismsDiffer>
    <experiments>3</experiments>
</comment>
<comment type="interaction">
    <interactant intactId="EBI-10975473">
        <id>O60333-2</id>
    </interactant>
    <interactant intactId="EBI-739789">
        <id>Q92997</id>
        <label>DVL3</label>
    </interactant>
    <organismsDiffer>false</organismsDiffer>
    <experiments>3</experiments>
</comment>
<comment type="interaction">
    <interactant intactId="EBI-10975473">
        <id>O60333-2</id>
    </interactant>
    <interactant intactId="EBI-372173">
        <id>O77932</id>
        <label>DXO</label>
    </interactant>
    <organismsDiffer>false</organismsDiffer>
    <experiments>3</experiments>
</comment>
<comment type="interaction">
    <interactant intactId="EBI-10975473">
        <id>O60333-2</id>
    </interactant>
    <interactant intactId="EBI-11132357">
        <id>O75530-2</id>
        <label>EED</label>
    </interactant>
    <organismsDiffer>false</organismsDiffer>
    <experiments>3</experiments>
</comment>
<comment type="interaction">
    <interactant intactId="EBI-10975473">
        <id>O60333-2</id>
    </interactant>
    <interactant intactId="EBI-711990">
        <id>O00303</id>
        <label>EIF3F</label>
    </interactant>
    <organismsDiffer>false</organismsDiffer>
    <experiments>3</experiments>
</comment>
<comment type="interaction">
    <interactant intactId="EBI-10975473">
        <id>O60333-2</id>
    </interactant>
    <interactant intactId="EBI-3940939">
        <id>Q9H6S3</id>
        <label>EPS8L2</label>
    </interactant>
    <organismsDiffer>false</organismsDiffer>
    <experiments>3</experiments>
</comment>
<comment type="interaction">
    <interactant intactId="EBI-10975473">
        <id>O60333-2</id>
    </interactant>
    <interactant intactId="EBI-16466949">
        <id>Q13216-2</id>
        <label>ERCC8</label>
    </interactant>
    <organismsDiffer>false</organismsDiffer>
    <experiments>3</experiments>
</comment>
<comment type="interaction">
    <interactant intactId="EBI-10975473">
        <id>O60333-2</id>
    </interactant>
    <interactant intactId="EBI-12260294">
        <id>Q9NQ30</id>
        <label>ESM1</label>
    </interactant>
    <organismsDiffer>false</organismsDiffer>
    <experiments>3</experiments>
</comment>
<comment type="interaction">
    <interactant intactId="EBI-10975473">
        <id>O60333-2</id>
    </interactant>
    <interactant intactId="EBI-10213520">
        <id>Q6NXG1</id>
        <label>ESRP1</label>
    </interactant>
    <organismsDiffer>false</organismsDiffer>
    <experiments>3</experiments>
</comment>
<comment type="interaction">
    <interactant intactId="EBI-10975473">
        <id>O60333-2</id>
    </interactant>
    <interactant intactId="EBI-9089567">
        <id>Q99504</id>
        <label>EYA3</label>
    </interactant>
    <organismsDiffer>false</organismsDiffer>
    <experiments>3</experiments>
</comment>
<comment type="interaction">
    <interactant intactId="EBI-10975473">
        <id>O60333-2</id>
    </interactant>
    <interactant intactId="EBI-10697159">
        <id>O15540</id>
        <label>FABP7</label>
    </interactant>
    <organismsDiffer>false</organismsDiffer>
    <experiments>3</experiments>
</comment>
<comment type="interaction">
    <interactant intactId="EBI-10975473">
        <id>O60333-2</id>
    </interactant>
    <interactant intactId="EBI-3893327">
        <id>Q6P1L5</id>
        <label>FAM117B</label>
    </interactant>
    <organismsDiffer>false</organismsDiffer>
    <experiments>3</experiments>
</comment>
<comment type="interaction">
    <interactant intactId="EBI-10975473">
        <id>O60333-2</id>
    </interactant>
    <interactant intactId="EBI-25835236">
        <id>Q49AJ0-4</id>
        <label>FAM135B</label>
    </interactant>
    <organismsDiffer>false</organismsDiffer>
    <experiments>3</experiments>
</comment>
<comment type="interaction">
    <interactant intactId="EBI-10975473">
        <id>O60333-2</id>
    </interactant>
    <interactant intactId="EBI-11793142">
        <id>Q96GL9</id>
        <label>FAM163A</label>
    </interactant>
    <organismsDiffer>false</organismsDiffer>
    <experiments>3</experiments>
</comment>
<comment type="interaction">
    <interactant intactId="EBI-10975473">
        <id>O60333-2</id>
    </interactant>
    <interactant intactId="EBI-5461838">
        <id>Q17RN3</id>
        <label>FAM98C</label>
    </interactant>
    <organismsDiffer>false</organismsDiffer>
    <experiments>3</experiments>
</comment>
<comment type="interaction">
    <interactant intactId="EBI-10975473">
        <id>O60333-2</id>
    </interactant>
    <interactant intactId="EBI-8468186">
        <id>Q8IZU1</id>
        <label>FAM9A</label>
    </interactant>
    <organismsDiffer>false</organismsDiffer>
    <experiments>3</experiments>
</comment>
<comment type="interaction">
    <interactant intactId="EBI-10975473">
        <id>O60333-2</id>
    </interactant>
    <interactant intactId="EBI-81610">
        <id>O15287</id>
        <label>FANCG</label>
    </interactant>
    <organismsDiffer>false</organismsDiffer>
    <experiments>3</experiments>
</comment>
<comment type="interaction">
    <interactant intactId="EBI-10975473">
        <id>O60333-2</id>
    </interactant>
    <interactant intactId="EBI-21975404">
        <id>Q8TC84</id>
        <label>FANK1</label>
    </interactant>
    <organismsDiffer>false</organismsDiffer>
    <experiments>3</experiments>
</comment>
<comment type="interaction">
    <interactant intactId="EBI-10975473">
        <id>O60333-2</id>
    </interactant>
    <interactant intactId="EBI-3957005">
        <id>Q53R41</id>
        <label>FASTKD1</label>
    </interactant>
    <organismsDiffer>false</organismsDiffer>
    <experiments>3</experiments>
</comment>
<comment type="interaction">
    <interactant intactId="EBI-10975473">
        <id>O60333-2</id>
    </interactant>
    <interactant intactId="EBI-719781">
        <id>O00757</id>
        <label>FBP2</label>
    </interactant>
    <organismsDiffer>false</organismsDiffer>
    <experiments>3</experiments>
</comment>
<comment type="interaction">
    <interactant intactId="EBI-10975473">
        <id>O60333-2</id>
    </interactant>
    <interactant intactId="EBI-396453">
        <id>Q9UHY8</id>
        <label>FEZ2</label>
    </interactant>
    <organismsDiffer>false</organismsDiffer>
    <experiments>3</experiments>
</comment>
<comment type="interaction">
    <interactant intactId="EBI-10975473">
        <id>O60333-2</id>
    </interactant>
    <interactant intactId="EBI-744510">
        <id>P15407</id>
        <label>FOSL1</label>
    </interactant>
    <organismsDiffer>false</organismsDiffer>
    <experiments>3</experiments>
</comment>
<comment type="interaction">
    <interactant intactId="EBI-10975473">
        <id>O60333-2</id>
    </interactant>
    <interactant intactId="EBI-3907241">
        <id>Q8NCL4</id>
        <label>GALNT6</label>
    </interactant>
    <organismsDiffer>false</organismsDiffer>
    <experiments>3</experiments>
</comment>
<comment type="interaction">
    <interactant intactId="EBI-10975473">
        <id>O60333-2</id>
    </interactant>
    <interactant intactId="EBI-9090198">
        <id>P15976-2</id>
        <label>GATA1</label>
    </interactant>
    <organismsDiffer>false</organismsDiffer>
    <experiments>3</experiments>
</comment>
<comment type="interaction">
    <interactant intactId="EBI-10975473">
        <id>O60333-2</id>
    </interactant>
    <interactant intactId="EBI-8799578">
        <id>Q9NXC2</id>
        <label>GFOD1</label>
    </interactant>
    <organismsDiffer>false</organismsDiffer>
    <experiments>3</experiments>
</comment>
<comment type="interaction">
    <interactant intactId="EBI-10975473">
        <id>O60333-2</id>
    </interactant>
    <interactant intactId="EBI-14061927">
        <id>P10075</id>
        <label>GLI4</label>
    </interactant>
    <organismsDiffer>false</organismsDiffer>
    <experiments>3</experiments>
</comment>
<comment type="interaction">
    <interactant intactId="EBI-10975473">
        <id>O60333-2</id>
    </interactant>
    <interactant intactId="EBI-22000587">
        <id>Q9HBQ8</id>
        <label>GOLGA2P5</label>
    </interactant>
    <organismsDiffer>false</organismsDiffer>
    <experiments>3</experiments>
</comment>
<comment type="interaction">
    <interactant intactId="EBI-10975473">
        <id>O60333-2</id>
    </interactant>
    <interactant intactId="EBI-751540">
        <id>O95872</id>
        <label>GPANK1</label>
    </interactant>
    <organismsDiffer>false</organismsDiffer>
    <experiments>3</experiments>
</comment>
<comment type="interaction">
    <interactant intactId="EBI-10975473">
        <id>O60333-2</id>
    </interactant>
    <interactant intactId="EBI-21649723">
        <id>Q7Z602</id>
        <label>GPR141</label>
    </interactant>
    <organismsDiffer>false</organismsDiffer>
    <experiments>3</experiments>
</comment>
<comment type="interaction">
    <interactant intactId="EBI-10975473">
        <id>O60333-2</id>
    </interactant>
    <interactant intactId="EBI-347538">
        <id>Q9Y4H4</id>
        <label>GPSM3</label>
    </interactant>
    <organismsDiffer>false</organismsDiffer>
    <experiments>3</experiments>
</comment>
<comment type="interaction">
    <interactant intactId="EBI-10975473">
        <id>O60333-2</id>
    </interactant>
    <interactant intactId="EBI-2868501">
        <id>Q6NXT2</id>
        <label>H3-5</label>
    </interactant>
    <organismsDiffer>false</organismsDiffer>
    <experiments>3</experiments>
</comment>
<comment type="interaction">
    <interactant intactId="EBI-10975473">
        <id>O60333-2</id>
    </interactant>
    <interactant intactId="EBI-25843825">
        <id>A8K0U2</id>
        <label>hCG_2001421</label>
    </interactant>
    <organismsDiffer>false</organismsDiffer>
    <experiments>3</experiments>
</comment>
<comment type="interaction">
    <interactant intactId="EBI-10975473">
        <id>O60333-2</id>
    </interactant>
    <interactant intactId="EBI-740785">
        <id>P49639</id>
        <label>HOXA1</label>
    </interactant>
    <organismsDiffer>false</organismsDiffer>
    <experiments>3</experiments>
</comment>
<comment type="interaction">
    <interactant intactId="EBI-10975473">
        <id>O60333-2</id>
    </interactant>
    <interactant intactId="EBI-3923226">
        <id>P09017</id>
        <label>HOXC4</label>
    </interactant>
    <organismsDiffer>false</organismsDiffer>
    <experiments>3</experiments>
</comment>
<comment type="interaction">
    <interactant intactId="EBI-10975473">
        <id>O60333-2</id>
    </interactant>
    <interactant intactId="EBI-25835621">
        <id>Q96EW2-2</id>
        <label>HSPBAP1</label>
    </interactant>
    <organismsDiffer>false</organismsDiffer>
    <experiments>3</experiments>
</comment>
<comment type="interaction">
    <interactant intactId="EBI-10975473">
        <id>O60333-2</id>
    </interactant>
    <interactant intactId="EBI-9091197">
        <id>Q8IY31-3</id>
        <label>IFT20</label>
    </interactant>
    <organismsDiffer>false</organismsDiffer>
    <experiments>3</experiments>
</comment>
<comment type="interaction">
    <interactant intactId="EBI-10975473">
        <id>O60333-2</id>
    </interactant>
    <interactant intactId="EBI-2831948">
        <id>P22692</id>
        <label>IGFBP4</label>
    </interactant>
    <organismsDiffer>false</organismsDiffer>
    <experiments>3</experiments>
</comment>
<comment type="interaction">
    <interactant intactId="EBI-10975473">
        <id>O60333-2</id>
    </interactant>
    <interactant intactId="EBI-17178971">
        <id>Q14005-2</id>
        <label>IL16</label>
    </interactant>
    <organismsDiffer>false</organismsDiffer>
    <experiments>3</experiments>
</comment>
<comment type="interaction">
    <interactant intactId="EBI-10975473">
        <id>O60333-2</id>
    </interactant>
    <interactant intactId="EBI-743980">
        <id>Q9NXX0</id>
        <label>ILF3</label>
    </interactant>
    <organismsDiffer>false</organismsDiffer>
    <experiments>3</experiments>
</comment>
<comment type="interaction">
    <interactant intactId="EBI-10975473">
        <id>O60333-2</id>
    </interactant>
    <interactant intactId="EBI-21602071">
        <id>Q8WYH8-2</id>
        <label>ING5</label>
    </interactant>
    <organismsDiffer>false</organismsDiffer>
    <experiments>3</experiments>
</comment>
<comment type="interaction">
    <interactant intactId="EBI-10975473">
        <id>O60333-2</id>
    </interactant>
    <interactant intactId="EBI-10238842">
        <id>Q8IXL9</id>
        <label>IQCF2</label>
    </interactant>
    <organismsDiffer>false</organismsDiffer>
    <experiments>3</experiments>
</comment>
<comment type="interaction">
    <interactant intactId="EBI-10975473">
        <id>O60333-2</id>
    </interactant>
    <interactant intactId="EBI-10220600">
        <id>Q8NA54</id>
        <label>IQUB</label>
    </interactant>
    <organismsDiffer>false</organismsDiffer>
    <experiments>3</experiments>
</comment>
<comment type="interaction">
    <interactant intactId="EBI-10975473">
        <id>O60333-2</id>
    </interactant>
    <interactant intactId="EBI-10258659">
        <id>Q86U28</id>
        <label>ISCA2</label>
    </interactant>
    <organismsDiffer>false</organismsDiffer>
    <experiments>3</experiments>
</comment>
<comment type="interaction">
    <interactant intactId="EBI-10975473">
        <id>O60333-2</id>
    </interactant>
    <interactant intactId="EBI-25856470">
        <id>Q9UKP3-2</id>
        <label>ITGB1BP2</label>
    </interactant>
    <organismsDiffer>false</organismsDiffer>
    <experiments>3</experiments>
</comment>
<comment type="interaction">
    <interactant intactId="EBI-10975473">
        <id>O60333-2</id>
    </interactant>
    <interactant intactId="EBI-9090173">
        <id>P0C870</id>
        <label>JMJD7</label>
    </interactant>
    <organismsDiffer>false</organismsDiffer>
    <experiments>3</experiments>
</comment>
<comment type="interaction">
    <interactant intactId="EBI-10975473">
        <id>O60333-2</id>
    </interactant>
    <interactant intactId="EBI-25871195">
        <id>Q9NVX7-2</id>
        <label>KBTBD4</label>
    </interactant>
    <organismsDiffer>false</organismsDiffer>
    <experiments>3</experiments>
</comment>
<comment type="interaction">
    <interactant intactId="EBI-10975473">
        <id>O60333-2</id>
    </interactant>
    <interactant intactId="EBI-742916">
        <id>Q8WZ19</id>
        <label>KCTD13</label>
    </interactant>
    <organismsDiffer>false</organismsDiffer>
    <experiments>3</experiments>
</comment>
<comment type="interaction">
    <interactant intactId="EBI-10975473">
        <id>O60333-2</id>
    </interactant>
    <interactant intactId="EBI-12382297">
        <id>Q96SI1-2</id>
        <label>KCTD15</label>
    </interactant>
    <organismsDiffer>false</organismsDiffer>
    <experiments>3</experiments>
</comment>
<comment type="interaction">
    <interactant intactId="EBI-10975473">
        <id>O60333-2</id>
    </interactant>
    <interactant intactId="EBI-3909166">
        <id>Q06136</id>
        <label>KDSR</label>
    </interactant>
    <organismsDiffer>false</organismsDiffer>
    <experiments>3</experiments>
</comment>
<comment type="interaction">
    <interactant intactId="EBI-10975473">
        <id>O60333-2</id>
    </interactant>
    <interactant intactId="EBI-739493">
        <id>Q6ZU52</id>
        <label>KIAA0408</label>
    </interactant>
    <organismsDiffer>false</organismsDiffer>
    <experiments>3</experiments>
</comment>
<comment type="interaction">
    <interactant intactId="EBI-10975473">
        <id>O60333-2</id>
    </interactant>
    <interactant intactId="EBI-2679809">
        <id>Q12756</id>
        <label>KIF1A</label>
    </interactant>
    <organismsDiffer>false</organismsDiffer>
    <experiments>3</experiments>
</comment>
<comment type="interaction">
    <interactant intactId="EBI-10975473">
        <id>O60333-2</id>
    </interactant>
    <interactant intactId="EBI-2796400">
        <id>Q9UIH9</id>
        <label>KLF15</label>
    </interactant>
    <organismsDiffer>false</organismsDiffer>
    <experiments>3</experiments>
</comment>
<comment type="interaction">
    <interactant intactId="EBI-10975473">
        <id>O60333-2</id>
    </interactant>
    <interactant intactId="EBI-8472267">
        <id>P57682</id>
        <label>KLF3</label>
    </interactant>
    <organismsDiffer>false</organismsDiffer>
    <experiments>3</experiments>
</comment>
<comment type="interaction">
    <interactant intactId="EBI-10975473">
        <id>O60333-2</id>
    </interactant>
    <interactant intactId="EBI-714379">
        <id>Q9Y2M5</id>
        <label>KLHL20</label>
    </interactant>
    <organismsDiffer>false</organismsDiffer>
    <experiments>3</experiments>
</comment>
<comment type="interaction">
    <interactant intactId="EBI-10975473">
        <id>O60333-2</id>
    </interactant>
    <interactant intactId="EBI-8473062">
        <id>Q8N1A0</id>
        <label>KRT222</label>
    </interactant>
    <organismsDiffer>false</organismsDiffer>
    <experiments>3</experiments>
</comment>
<comment type="interaction">
    <interactant intactId="EBI-10975473">
        <id>O60333-2</id>
    </interactant>
    <interactant intactId="EBI-1049638">
        <id>Q14525</id>
        <label>KRT33B</label>
    </interactant>
    <organismsDiffer>false</organismsDiffer>
    <experiments>3</experiments>
</comment>
<comment type="interaction">
    <interactant intactId="EBI-10975473">
        <id>O60333-2</id>
    </interactant>
    <interactant intactId="EBI-10241252">
        <id>Q3SY46</id>
        <label>KRTAP13-3</label>
    </interactant>
    <organismsDiffer>false</organismsDiffer>
    <experiments>3</experiments>
</comment>
<comment type="interaction">
    <interactant intactId="EBI-10975473">
        <id>O60333-2</id>
    </interactant>
    <interactant intactId="EBI-10241353">
        <id>Q3SYF9</id>
        <label>KRTAP19-7</label>
    </interactant>
    <organismsDiffer>false</organismsDiffer>
    <experiments>3</experiments>
</comment>
<comment type="interaction">
    <interactant intactId="EBI-10975473">
        <id>O60333-2</id>
    </interactant>
    <interactant intactId="EBI-10261141">
        <id>Q8IUC2</id>
        <label>KRTAP8-1</label>
    </interactant>
    <organismsDiffer>false</organismsDiffer>
    <experiments>3</experiments>
</comment>
<comment type="interaction">
    <interactant intactId="EBI-10975473">
        <id>O60333-2</id>
    </interactant>
    <interactant intactId="EBI-9088686">
        <id>Q14847-2</id>
        <label>LASP1</label>
    </interactant>
    <organismsDiffer>false</organismsDiffer>
    <experiments>3</experiments>
</comment>
<comment type="interaction">
    <interactant intactId="EBI-10975473">
        <id>O60333-2</id>
    </interactant>
    <interactant intactId="EBI-8473670">
        <id>O95447</id>
        <label>LCA5L</label>
    </interactant>
    <organismsDiffer>false</organismsDiffer>
    <experiments>3</experiments>
</comment>
<comment type="interaction">
    <interactant intactId="EBI-10975473">
        <id>O60333-2</id>
    </interactant>
    <interactant intactId="EBI-10245913">
        <id>Q5T7P3</id>
        <label>LCE1B</label>
    </interactant>
    <organismsDiffer>false</organismsDiffer>
    <experiments>3</experiments>
</comment>
<comment type="interaction">
    <interactant intactId="EBI-10975473">
        <id>O60333-2</id>
    </interactant>
    <interactant intactId="EBI-739546">
        <id>Q96PV6</id>
        <label>LENG8</label>
    </interactant>
    <organismsDiffer>false</organismsDiffer>
    <experiments>3</experiments>
</comment>
<comment type="interaction">
    <interactant intactId="EBI-10975473">
        <id>O60333-2</id>
    </interactant>
    <interactant intactId="EBI-8474075">
        <id>Q68G74</id>
        <label>LHX8</label>
    </interactant>
    <organismsDiffer>false</organismsDiffer>
    <experiments>3</experiments>
</comment>
<comment type="interaction">
    <interactant intactId="EBI-10975473">
        <id>O60333-2</id>
    </interactant>
    <interactant intactId="EBI-2340947">
        <id>Q8N448</id>
        <label>LNX2</label>
    </interactant>
    <organismsDiffer>false</organismsDiffer>
    <experiments>3</experiments>
</comment>
<comment type="interaction">
    <interactant intactId="EBI-10975473">
        <id>O60333-2</id>
    </interactant>
    <interactant intactId="EBI-9088215">
        <id>A2RU56</id>
        <label>LOC401296</label>
    </interactant>
    <organismsDiffer>false</organismsDiffer>
    <experiments>3</experiments>
</comment>
<comment type="interaction">
    <interactant intactId="EBI-10975473">
        <id>O60333-2</id>
    </interactant>
    <interactant intactId="EBI-749562">
        <id>Q96JB6</id>
        <label>LOXL4</label>
    </interactant>
    <organismsDiffer>false</organismsDiffer>
    <experiments>3</experiments>
</comment>
<comment type="interaction">
    <interactant intactId="EBI-10975473">
        <id>O60333-2</id>
    </interactant>
    <interactant intactId="EBI-5278370">
        <id>Q14693</id>
        <label>LPIN1</label>
    </interactant>
    <organismsDiffer>false</organismsDiffer>
    <experiments>3</experiments>
</comment>
<comment type="interaction">
    <interactant intactId="EBI-10975473">
        <id>O60333-2</id>
    </interactant>
    <interactant intactId="EBI-12056869">
        <id>Q9UDY8-2</id>
        <label>MALT1</label>
    </interactant>
    <organismsDiffer>false</organismsDiffer>
    <experiments>3</experiments>
</comment>
<comment type="interaction">
    <interactant intactId="EBI-10975473">
        <id>O60333-2</id>
    </interactant>
    <interactant intactId="EBI-476263">
        <id>Q99683</id>
        <label>MAP3K5</label>
    </interactant>
    <organismsDiffer>false</organismsDiffer>
    <experiments>3</experiments>
</comment>
<comment type="interaction">
    <interactant intactId="EBI-10975473">
        <id>O60333-2</id>
    </interactant>
    <interactant intactId="EBI-25848049">
        <id>P61244-4</id>
        <label>MAX</label>
    </interactant>
    <organismsDiffer>false</organismsDiffer>
    <experiments>3</experiments>
</comment>
<comment type="interaction">
    <interactant intactId="EBI-10975473">
        <id>O60333-2</id>
    </interactant>
    <interactant intactId="EBI-10182361">
        <id>Q9NS73-5</id>
        <label>MBIP</label>
    </interactant>
    <organismsDiffer>false</organismsDiffer>
    <experiments>3</experiments>
</comment>
<comment type="interaction">
    <interactant intactId="EBI-10975473">
        <id>O60333-2</id>
    </interactant>
    <interactant intactId="EBI-23820194">
        <id>Q03112-9</id>
        <label>MECOM</label>
    </interactant>
    <organismsDiffer>false</organismsDiffer>
    <experiments>3</experiments>
</comment>
<comment type="interaction">
    <interactant intactId="EBI-10975473">
        <id>O60333-2</id>
    </interactant>
    <interactant intactId="EBI-8487781">
        <id>Q8N6F8</id>
        <label>METTL27</label>
    </interactant>
    <organismsDiffer>false</organismsDiffer>
    <experiments>3</experiments>
</comment>
<comment type="interaction">
    <interactant intactId="EBI-10975473">
        <id>O60333-2</id>
    </interactant>
    <interactant intactId="EBI-1104552">
        <id>Q9NYP9</id>
        <label>MIS18A</label>
    </interactant>
    <organismsDiffer>false</organismsDiffer>
    <experiments>3</experiments>
</comment>
<comment type="interaction">
    <interactant intactId="EBI-10975473">
        <id>O60333-2</id>
    </interactant>
    <interactant intactId="EBI-8475277">
        <id>Q15049</id>
        <label>MLC1</label>
    </interactant>
    <organismsDiffer>false</organismsDiffer>
    <experiments>3</experiments>
</comment>
<comment type="interaction">
    <interactant intactId="EBI-10975473">
        <id>O60333-2</id>
    </interactant>
    <interactant intactId="EBI-25835557">
        <id>A0A0A0MR05</id>
        <label>MLST8</label>
    </interactant>
    <organismsDiffer>false</organismsDiffer>
    <experiments>3</experiments>
</comment>
<comment type="interaction">
    <interactant intactId="EBI-10975473">
        <id>O60333-2</id>
    </interactant>
    <interactant intactId="EBI-2512452">
        <id>Q8N594</id>
        <label>MPND</label>
    </interactant>
    <organismsDiffer>false</organismsDiffer>
    <experiments>3</experiments>
</comment>
<comment type="interaction">
    <interactant intactId="EBI-10975473">
        <id>O60333-2</id>
    </interactant>
    <interactant intactId="EBI-995714">
        <id>Q9Y605</id>
        <label>MRFAP1</label>
    </interactant>
    <organismsDiffer>false</organismsDiffer>
    <experiments>3</experiments>
</comment>
<comment type="interaction">
    <interactant intactId="EBI-10975473">
        <id>O60333-2</id>
    </interactant>
    <interactant intactId="EBI-748896">
        <id>Q96HT8</id>
        <label>MRFAP1L1</label>
    </interactant>
    <organismsDiffer>false</organismsDiffer>
    <experiments>3</experiments>
</comment>
<comment type="interaction">
    <interactant intactId="EBI-10975473">
        <id>O60333-2</id>
    </interactant>
    <interactant intactId="EBI-10699187">
        <id>Q8IXL7-2</id>
        <label>MSRB3</label>
    </interactant>
    <organismsDiffer>false</organismsDiffer>
    <experiments>3</experiments>
</comment>
<comment type="interaction">
    <interactant intactId="EBI-10975473">
        <id>O60333-2</id>
    </interactant>
    <interactant intactId="EBI-3446748">
        <id>Q9NPC7</id>
        <label>MYNN</label>
    </interactant>
    <organismsDiffer>false</organismsDiffer>
    <experiments>3</experiments>
</comment>
<comment type="interaction">
    <interactant intactId="EBI-10975473">
        <id>O60333-2</id>
    </interactant>
    <interactant intactId="EBI-25876328">
        <id>P28331-5</id>
        <label>NDUFS1</label>
    </interactant>
    <organismsDiffer>false</organismsDiffer>
    <experiments>3</experiments>
</comment>
<comment type="interaction">
    <interactant intactId="EBI-10975473">
        <id>O60333-2</id>
    </interactant>
    <interactant intactId="EBI-2880203">
        <id>O76041</id>
        <label>NEBL</label>
    </interactant>
    <organismsDiffer>false</organismsDiffer>
    <experiments>3</experiments>
</comment>
<comment type="interaction">
    <interactant intactId="EBI-10975473">
        <id>O60333-2</id>
    </interactant>
    <interactant intactId="EBI-10178578">
        <id>I6L9F6</id>
        <label>NEFL</label>
    </interactant>
    <organismsDiffer>false</organismsDiffer>
    <experiments>3</experiments>
</comment>
<comment type="interaction">
    <interactant intactId="EBI-10975473">
        <id>O60333-2</id>
    </interactant>
    <interactant intactId="EBI-718372">
        <id>Q8N5V2</id>
        <label>NGEF</label>
    </interactant>
    <organismsDiffer>false</organismsDiffer>
    <experiments>3</experiments>
</comment>
<comment type="interaction">
    <interactant intactId="EBI-10975473">
        <id>O60333-2</id>
    </interactant>
    <interactant intactId="EBI-10697320">
        <id>Q8NBF2-2</id>
        <label>NHLRC2</label>
    </interactant>
    <organismsDiffer>false</organismsDiffer>
    <experiments>3</experiments>
</comment>
<comment type="interaction">
    <interactant intactId="EBI-10975473">
        <id>O60333-2</id>
    </interactant>
    <interactant intactId="EBI-6144053">
        <id>Q14995</id>
        <label>NR1D2</label>
    </interactant>
    <organismsDiffer>false</organismsDiffer>
    <experiments>3</experiments>
</comment>
<comment type="interaction">
    <interactant intactId="EBI-10975473">
        <id>O60333-2</id>
    </interactant>
    <interactant intactId="EBI-2557388">
        <id>Q96MF7</id>
        <label>NSMCE2</label>
    </interactant>
    <organismsDiffer>false</organismsDiffer>
    <experiments>3</experiments>
</comment>
<comment type="interaction">
    <interactant intactId="EBI-10975473">
        <id>O60333-2</id>
    </interactant>
    <interactant intactId="EBI-25842707">
        <id>Q6X4W1-6</id>
        <label>NSMF</label>
    </interactant>
    <organismsDiffer>false</organismsDiffer>
    <experiments>3</experiments>
</comment>
<comment type="interaction">
    <interactant intactId="EBI-10975473">
        <id>O60333-2</id>
    </interactant>
    <interactant intactId="EBI-25834643">
        <id>P36639-4</id>
        <label>NUDT1</label>
    </interactant>
    <organismsDiffer>false</organismsDiffer>
    <experiments>3</experiments>
</comment>
<comment type="interaction">
    <interactant intactId="EBI-10975473">
        <id>O60333-2</id>
    </interactant>
    <interactant intactId="EBI-1210753">
        <id>Q7Z417</id>
        <label>NUFIP2</label>
    </interactant>
    <organismsDiffer>false</organismsDiffer>
    <experiments>3</experiments>
</comment>
<comment type="interaction">
    <interactant intactId="EBI-10975473">
        <id>O60333-2</id>
    </interactant>
    <interactant intactId="EBI-18577082">
        <id>O15381-5</id>
        <label>NVL</label>
    </interactant>
    <organismsDiffer>false</organismsDiffer>
    <experiments>3</experiments>
</comment>
<comment type="interaction">
    <interactant intactId="EBI-10975473">
        <id>O60333-2</id>
    </interactant>
    <interactant intactId="EBI-9090919">
        <id>Q5BJF6-2</id>
        <label>ODF2</label>
    </interactant>
    <organismsDiffer>false</organismsDiffer>
    <experiments>3</experiments>
</comment>
<comment type="interaction">
    <interactant intactId="EBI-10975473">
        <id>O60333-2</id>
    </interactant>
    <interactant intactId="EBI-536879">
        <id>O43482</id>
        <label>OIP5</label>
    </interactant>
    <organismsDiffer>false</organismsDiffer>
    <experiments>3</experiments>
</comment>
<comment type="interaction">
    <interactant intactId="EBI-10975473">
        <id>O60333-2</id>
    </interactant>
    <interactant intactId="EBI-1058491">
        <id>Q96FW1</id>
        <label>OTUB1</label>
    </interactant>
    <organismsDiffer>false</organismsDiffer>
    <experiments>3</experiments>
</comment>
<comment type="interaction">
    <interactant intactId="EBI-10975473">
        <id>O60333-2</id>
    </interactant>
    <interactant intactId="EBI-25830200">
        <id>Q6GQQ9-2</id>
        <label>OTUD7B</label>
    </interactant>
    <organismsDiffer>false</organismsDiffer>
    <experiments>3</experiments>
</comment>
<comment type="interaction">
    <interactant intactId="EBI-10975473">
        <id>O60333-2</id>
    </interactant>
    <interactant intactId="EBI-17159452">
        <id>Q9NR21-5</id>
        <label>PARP11</label>
    </interactant>
    <organismsDiffer>false</organismsDiffer>
    <experiments>3</experiments>
</comment>
<comment type="interaction">
    <interactant intactId="EBI-10975473">
        <id>O60333-2</id>
    </interactant>
    <interactant intactId="EBI-11022007">
        <id>Q9HBE1-4</id>
        <label>PATZ1</label>
    </interactant>
    <organismsDiffer>false</organismsDiffer>
    <experiments>3</experiments>
</comment>
<comment type="interaction">
    <interactant intactId="EBI-10975473">
        <id>O60333-2</id>
    </interactant>
    <interactant intactId="EBI-12386584">
        <id>P22061-2</id>
        <label>PCMT1</label>
    </interactant>
    <organismsDiffer>false</organismsDiffer>
    <experiments>3</experiments>
</comment>
<comment type="interaction">
    <interactant intactId="EBI-10975473">
        <id>O60333-2</id>
    </interactant>
    <interactant intactId="EBI-6309018">
        <id>Q9NV79</id>
        <label>PCMTD2</label>
    </interactant>
    <organismsDiffer>false</organismsDiffer>
    <experiments>3</experiments>
</comment>
<comment type="interaction">
    <interactant intactId="EBI-10975473">
        <id>O60333-2</id>
    </interactant>
    <interactant intactId="EBI-1043580">
        <id>Q9BRX2</id>
        <label>PELO</label>
    </interactant>
    <organismsDiffer>false</organismsDiffer>
    <experiments>3</experiments>
</comment>
<comment type="interaction">
    <interactant intactId="EBI-10975473">
        <id>O60333-2</id>
    </interactant>
    <interactant intactId="EBI-2557276">
        <id>O15534</id>
        <label>PER1</label>
    </interactant>
    <organismsDiffer>false</organismsDiffer>
    <experiments>3</experiments>
</comment>
<comment type="interaction">
    <interactant intactId="EBI-10975473">
        <id>O60333-2</id>
    </interactant>
    <interactant intactId="EBI-17183069">
        <id>Q96FX8</id>
        <label>PERP</label>
    </interactant>
    <organismsDiffer>false</organismsDiffer>
    <experiments>3</experiments>
</comment>
<comment type="interaction">
    <interactant intactId="EBI-10975473">
        <id>O60333-2</id>
    </interactant>
    <interactant intactId="EBI-12339509">
        <id>Q96LB9</id>
        <label>PGLYRP3</label>
    </interactant>
    <organismsDiffer>false</organismsDiffer>
    <experiments>3</experiments>
</comment>
<comment type="interaction">
    <interactant intactId="EBI-10975473">
        <id>O60333-2</id>
    </interactant>
    <interactant intactId="EBI-2555365">
        <id>Q7RTV0</id>
        <label>PHF5A</label>
    </interactant>
    <organismsDiffer>false</organismsDiffer>
    <experiments>3</experiments>
</comment>
<comment type="interaction">
    <interactant intactId="EBI-10975473">
        <id>O60333-2</id>
    </interactant>
    <interactant intactId="EBI-629434">
        <id>O75925</id>
        <label>PIAS1</label>
    </interactant>
    <organismsDiffer>false</organismsDiffer>
    <experiments>3</experiments>
</comment>
<comment type="interaction">
    <interactant intactId="EBI-10975473">
        <id>O60333-2</id>
    </interactant>
    <interactant intactId="EBI-12832742">
        <id>Q9UF11-2</id>
        <label>PLEKHB1</label>
    </interactant>
    <organismsDiffer>false</organismsDiffer>
    <experiments>3</experiments>
</comment>
<comment type="interaction">
    <interactant intactId="EBI-10975473">
        <id>O60333-2</id>
    </interactant>
    <interactant intactId="EBI-21503705">
        <id>Q58EX7-2</id>
        <label>PLEKHG4</label>
    </interactant>
    <organismsDiffer>false</organismsDiffer>
    <experiments>3</experiments>
</comment>
<comment type="interaction">
    <interactant intactId="EBI-10975473">
        <id>O60333-2</id>
    </interactant>
    <interactant intactId="EBI-12891828">
        <id>Q6ZR37</id>
        <label>PLEKHG7</label>
    </interactant>
    <organismsDiffer>false</organismsDiffer>
    <experiments>3</experiments>
</comment>
<comment type="interaction">
    <interactant intactId="EBI-10975473">
        <id>O60333-2</id>
    </interactant>
    <interactant intactId="EBI-2115275">
        <id>Q99541</id>
        <label>PLIN2</label>
    </interactant>
    <organismsDiffer>false</organismsDiffer>
    <experiments>3</experiments>
</comment>
<comment type="interaction">
    <interactant intactId="EBI-10975473">
        <id>O60333-2</id>
    </interactant>
    <interactant intactId="EBI-18063495">
        <id>Q8TBJ4</id>
        <label>PLPPR1</label>
    </interactant>
    <organismsDiffer>false</organismsDiffer>
    <experiments>3</experiments>
</comment>
<comment type="interaction">
    <interactant intactId="EBI-10975473">
        <id>O60333-2</id>
    </interactant>
    <interactant intactId="EBI-11751537">
        <id>Q8NA72-3</id>
        <label>POC5</label>
    </interactant>
    <organismsDiffer>false</organismsDiffer>
    <experiments>3</experiments>
</comment>
<comment type="interaction">
    <interactant intactId="EBI-10975473">
        <id>O60333-2</id>
    </interactant>
    <interactant intactId="EBI-710067">
        <id>Q9H1D9</id>
        <label>POLR3F</label>
    </interactant>
    <organismsDiffer>false</organismsDiffer>
    <experiments>3</experiments>
</comment>
<comment type="interaction">
    <interactant intactId="EBI-10975473">
        <id>O60333-2</id>
    </interactant>
    <interactant intactId="EBI-1053424">
        <id>O43741</id>
        <label>PRKAB2</label>
    </interactant>
    <organismsDiffer>false</organismsDiffer>
    <experiments>3</experiments>
</comment>
<comment type="interaction">
    <interactant intactId="EBI-10975473">
        <id>O60333-2</id>
    </interactant>
    <interactant intactId="EBI-749195">
        <id>P60891</id>
        <label>PRPS1</label>
    </interactant>
    <organismsDiffer>false</organismsDiffer>
    <experiments>3</experiments>
</comment>
<comment type="interaction">
    <interactant intactId="EBI-10975473">
        <id>O60333-2</id>
    </interactant>
    <interactant intactId="EBI-4290895">
        <id>P11908</id>
        <label>PRPS2</label>
    </interactant>
    <organismsDiffer>false</organismsDiffer>
    <experiments>3</experiments>
</comment>
<comment type="interaction">
    <interactant intactId="EBI-10975473">
        <id>O60333-2</id>
    </interactant>
    <interactant intactId="EBI-372312">
        <id>P28062-2</id>
        <label>PSMB8</label>
    </interactant>
    <organismsDiffer>false</organismsDiffer>
    <experiments>3</experiments>
</comment>
<comment type="interaction">
    <interactant intactId="EBI-10975473">
        <id>O60333-2</id>
    </interactant>
    <interactant intactId="EBI-347462">
        <id>P47897</id>
        <label>QARS1</label>
    </interactant>
    <organismsDiffer>false</organismsDiffer>
    <experiments>3</experiments>
</comment>
<comment type="interaction">
    <interactant intactId="EBI-10975473">
        <id>O60333-2</id>
    </interactant>
    <interactant intactId="EBI-746228">
        <id>Q9Y5P3</id>
        <label>RAI2</label>
    </interactant>
    <organismsDiffer>false</organismsDiffer>
    <experiments>3</experiments>
</comment>
<comment type="interaction">
    <interactant intactId="EBI-10975473">
        <id>O60333-2</id>
    </interactant>
    <interactant intactId="EBI-954272">
        <id>Q96PK6</id>
        <label>RBM14</label>
    </interactant>
    <organismsDiffer>false</organismsDiffer>
    <experiments>3</experiments>
</comment>
<comment type="interaction">
    <interactant intactId="EBI-10975473">
        <id>O60333-2</id>
    </interactant>
    <interactant intactId="EBI-1504830">
        <id>Q9P2K3-2</id>
        <label>RCOR3</label>
    </interactant>
    <organismsDiffer>false</organismsDiffer>
    <experiments>3</experiments>
</comment>
<comment type="interaction">
    <interactant intactId="EBI-10975473">
        <id>O60333-2</id>
    </interactant>
    <interactant intactId="EBI-17589229">
        <id>Q6NTF9-3</id>
        <label>RHBDD2</label>
    </interactant>
    <organismsDiffer>false</organismsDiffer>
    <experiments>3</experiments>
</comment>
<comment type="interaction">
    <interactant intactId="EBI-10975473">
        <id>O60333-2</id>
    </interactant>
    <interactant intactId="EBI-9027335">
        <id>Q8TDP1</id>
        <label>RNASEH2C</label>
    </interactant>
    <organismsDiffer>false</organismsDiffer>
    <experiments>3</experiments>
</comment>
<comment type="interaction">
    <interactant intactId="EBI-10975473">
        <id>O60333-2</id>
    </interactant>
    <interactant intactId="EBI-714023">
        <id>Q8N5U6</id>
        <label>RNF10</label>
    </interactant>
    <organismsDiffer>false</organismsDiffer>
    <experiments>3</experiments>
</comment>
<comment type="interaction">
    <interactant intactId="EBI-10975473">
        <id>O60333-2</id>
    </interactant>
    <interactant intactId="EBI-749039">
        <id>Q8WVD3</id>
        <label>RNF138</label>
    </interactant>
    <organismsDiffer>false</organismsDiffer>
    <experiments>3</experiments>
</comment>
<comment type="interaction">
    <interactant intactId="EBI-10975473">
        <id>O60333-2</id>
    </interactant>
    <interactant intactId="EBI-743938">
        <id>Q96D59</id>
        <label>RNF183</label>
    </interactant>
    <organismsDiffer>false</organismsDiffer>
    <experiments>3</experiments>
</comment>
<comment type="interaction">
    <interactant intactId="EBI-10975473">
        <id>O60333-2</id>
    </interactant>
    <interactant intactId="EBI-751555">
        <id>Q9H0X6</id>
        <label>RNF208</label>
    </interactant>
    <organismsDiffer>false</organismsDiffer>
    <experiments>3</experiments>
</comment>
<comment type="interaction">
    <interactant intactId="EBI-10975473">
        <id>O60333-2</id>
    </interactant>
    <interactant intactId="EBI-347895">
        <id>P62244</id>
        <label>RPS15A</label>
    </interactant>
    <organismsDiffer>false</organismsDiffer>
    <experiments>3</experiments>
</comment>
<comment type="interaction">
    <interactant intactId="EBI-10975473">
        <id>O60333-2</id>
    </interactant>
    <interactant intactId="EBI-354112">
        <id>P08865</id>
        <label>RPSA</label>
    </interactant>
    <organismsDiffer>false</organismsDiffer>
    <experiments>3</experiments>
</comment>
<comment type="interaction">
    <interactant intactId="EBI-10975473">
        <id>O60333-2</id>
    </interactant>
    <interactant intactId="EBI-10248967">
        <id>Q66K80</id>
        <label>RUSC1-AS1</label>
    </interactant>
    <organismsDiffer>false</organismsDiffer>
    <experiments>3</experiments>
</comment>
<comment type="interaction">
    <interactant intactId="EBI-10975473">
        <id>O60333-2</id>
    </interactant>
    <interactant intactId="EBI-752324">
        <id>Q8N488</id>
        <label>RYBP</label>
    </interactant>
    <organismsDiffer>false</organismsDiffer>
    <experiments>3</experiments>
</comment>
<comment type="interaction">
    <interactant intactId="EBI-10975473">
        <id>O60333-2</id>
    </interactant>
    <interactant intactId="EBI-11528848">
        <id>Q8N6K7-2</id>
        <label>SAMD3</label>
    </interactant>
    <organismsDiffer>false</organismsDiffer>
    <experiments>3</experiments>
</comment>
<comment type="interaction">
    <interactant intactId="EBI-10975473">
        <id>O60333-2</id>
    </interactant>
    <interactant intactId="EBI-12148649">
        <id>Q7Z3H4</id>
        <label>SAMD7</label>
    </interactant>
    <organismsDiffer>false</organismsDiffer>
    <experiments>3</experiments>
</comment>
<comment type="interaction">
    <interactant intactId="EBI-10975473">
        <id>O60333-2</id>
    </interactant>
    <interactant intactId="EBI-1172957">
        <id>P34741</id>
        <label>SDC2</label>
    </interactant>
    <organismsDiffer>false</organismsDiffer>
    <experiments>3</experiments>
</comment>
<comment type="interaction">
    <interactant intactId="EBI-10975473">
        <id>O60333-2</id>
    </interactant>
    <interactant intactId="EBI-727004">
        <id>O00560</id>
        <label>SDCBP</label>
    </interactant>
    <organismsDiffer>false</organismsDiffer>
    <experiments>3</experiments>
</comment>
<comment type="interaction">
    <interactant intactId="EBI-10975473">
        <id>O60333-2</id>
    </interactant>
    <interactant intactId="EBI-9089805">
        <id>Q9NTN9-3</id>
        <label>SEMA4G</label>
    </interactant>
    <organismsDiffer>false</organismsDiffer>
    <experiments>3</experiments>
</comment>
<comment type="interaction">
    <interactant intactId="EBI-10975473">
        <id>O60333-2</id>
    </interactant>
    <interactant intactId="EBI-346595">
        <id>Q96B97</id>
        <label>SH3KBP1</label>
    </interactant>
    <organismsDiffer>false</organismsDiffer>
    <experiments>3</experiments>
</comment>
<comment type="interaction">
    <interactant intactId="EBI-10975473">
        <id>O60333-2</id>
    </interactant>
    <interactant intactId="EBI-22000547">
        <id>Q9NUL5-3</id>
        <label>SHFL</label>
    </interactant>
    <organismsDiffer>false</organismsDiffer>
    <experiments>3</experiments>
</comment>
<comment type="interaction">
    <interactant intactId="EBI-10975473">
        <id>O60333-2</id>
    </interactant>
    <interactant intactId="EBI-2560428">
        <id>Q8IYI0</id>
        <label>SHLD1</label>
    </interactant>
    <organismsDiffer>false</organismsDiffer>
    <experiments>3</experiments>
</comment>
<comment type="interaction">
    <interactant intactId="EBI-10975473">
        <id>O60333-2</id>
    </interactant>
    <interactant intactId="EBI-9092164">
        <id>O60902-3</id>
        <label>SHOX2</label>
    </interactant>
    <organismsDiffer>false</organismsDiffer>
    <experiments>3</experiments>
</comment>
<comment type="interaction">
    <interactant intactId="EBI-10975473">
        <id>O60333-2</id>
    </interactant>
    <interactant intactId="EBI-2902468">
        <id>P12757</id>
        <label>SKIL</label>
    </interactant>
    <organismsDiffer>false</organismsDiffer>
    <experiments>3</experiments>
</comment>
<comment type="interaction">
    <interactant intactId="EBI-10975473">
        <id>O60333-2</id>
    </interactant>
    <interactant intactId="EBI-12832276">
        <id>P08195-4</id>
        <label>SLC3A2</label>
    </interactant>
    <organismsDiffer>false</organismsDiffer>
    <experiments>3</experiments>
</comment>
<comment type="interaction">
    <interactant intactId="EBI-10975473">
        <id>O60333-2</id>
    </interactant>
    <interactant intactId="EBI-25831241">
        <id>Q9NSD5-3</id>
        <label>SLC6A13</label>
    </interactant>
    <organismsDiffer>false</organismsDiffer>
    <experiments>3</experiments>
</comment>
<comment type="interaction">
    <interactant intactId="EBI-10975473">
        <id>O60333-2</id>
    </interactant>
    <interactant intactId="EBI-1760638">
        <id>Q92966</id>
        <label>SNAPC3</label>
    </interactant>
    <organismsDiffer>false</organismsDiffer>
    <experiments>3</experiments>
</comment>
<comment type="interaction">
    <interactant intactId="EBI-10975473">
        <id>O60333-2</id>
    </interactant>
    <interactant intactId="EBI-632715">
        <id>Q13573</id>
        <label>SNW1</label>
    </interactant>
    <organismsDiffer>false</organismsDiffer>
    <experiments>3</experiments>
</comment>
<comment type="interaction">
    <interactant intactId="EBI-10975473">
        <id>O60333-2</id>
    </interactant>
    <interactant intactId="EBI-11959123">
        <id>Q99932-2</id>
        <label>SPAG8</label>
    </interactant>
    <organismsDiffer>false</organismsDiffer>
    <experiments>3</experiments>
</comment>
<comment type="interaction">
    <interactant intactId="EBI-10975473">
        <id>O60333-2</id>
    </interactant>
    <interactant intactId="EBI-10174456">
        <id>Q8N865</id>
        <label>SPMIP4</label>
    </interactant>
    <organismsDiffer>false</organismsDiffer>
    <experiments>3</experiments>
</comment>
<comment type="interaction">
    <interactant intactId="EBI-10975473">
        <id>O60333-2</id>
    </interactant>
    <interactant intactId="EBI-8345366">
        <id>Q8TCT7-2</id>
        <label>SPPL2B</label>
    </interactant>
    <organismsDiffer>false</organismsDiffer>
    <experiments>3</experiments>
</comment>
<comment type="interaction">
    <interactant intactId="EBI-10975473">
        <id>O60333-2</id>
    </interactant>
    <interactant intactId="EBI-7082156">
        <id>Q7Z698</id>
        <label>SPRED2</label>
    </interactant>
    <organismsDiffer>false</organismsDiffer>
    <experiments>3</experiments>
</comment>
<comment type="interaction">
    <interactant intactId="EBI-10975473">
        <id>O60333-2</id>
    </interactant>
    <interactant intactId="EBI-354861">
        <id>Q9C004</id>
        <label>SPRY4</label>
    </interactant>
    <organismsDiffer>false</organismsDiffer>
    <experiments>3</experiments>
</comment>
<comment type="interaction">
    <interactant intactId="EBI-10975473">
        <id>O60333-2</id>
    </interactant>
    <interactant intactId="EBI-2323209">
        <id>Q99619</id>
        <label>SPSB2</label>
    </interactant>
    <organismsDiffer>false</organismsDiffer>
    <experiments>3</experiments>
</comment>
<comment type="interaction">
    <interactant intactId="EBI-10975473">
        <id>O60333-2</id>
    </interactant>
    <interactant intactId="EBI-18616594">
        <id>Q8IXS7</id>
        <label>SRGAP3</label>
    </interactant>
    <organismsDiffer>false</organismsDiffer>
    <experiments>3</experiments>
</comment>
<comment type="interaction">
    <interactant intactId="EBI-10975473">
        <id>O60333-2</id>
    </interactant>
    <interactant intactId="EBI-373258">
        <id>O75886</id>
        <label>STAM2</label>
    </interactant>
    <organismsDiffer>false</organismsDiffer>
    <experiments>3</experiments>
</comment>
<comment type="interaction">
    <interactant intactId="EBI-10975473">
        <id>O60333-2</id>
    </interactant>
    <interactant intactId="EBI-723091">
        <id>Q8NBJ7</id>
        <label>SUMF2</label>
    </interactant>
    <organismsDiffer>false</organismsDiffer>
    <experiments>3</experiments>
</comment>
<comment type="interaction">
    <interactant intactId="EBI-10975473">
        <id>O60333-2</id>
    </interactant>
    <interactant intactId="EBI-11285923">
        <id>Q9H7C4</id>
        <label>SYNC</label>
    </interactant>
    <organismsDiffer>false</organismsDiffer>
    <experiments>3</experiments>
</comment>
<comment type="interaction">
    <interactant intactId="EBI-10975473">
        <id>O60333-2</id>
    </interactant>
    <interactant intactId="EBI-25861603">
        <id>Q17RD7-3</id>
        <label>SYT16</label>
    </interactant>
    <organismsDiffer>false</organismsDiffer>
    <experiments>3</experiments>
</comment>
<comment type="interaction">
    <interactant intactId="EBI-10975473">
        <id>O60333-2</id>
    </interactant>
    <interactant intactId="EBI-18173581">
        <id>Q86TJ2-3</id>
        <label>TADA2B</label>
    </interactant>
    <organismsDiffer>false</organismsDiffer>
    <experiments>3</experiments>
</comment>
<comment type="interaction">
    <interactant intactId="EBI-10975473">
        <id>O60333-2</id>
    </interactant>
    <interactant intactId="EBI-745958">
        <id>Q5VWN6</id>
        <label>TASOR2</label>
    </interactant>
    <organismsDiffer>false</organismsDiffer>
    <experiments>3</experiments>
</comment>
<comment type="interaction">
    <interactant intactId="EBI-10975473">
        <id>O60333-2</id>
    </interactant>
    <interactant intactId="EBI-2116184">
        <id>Q8IYN2</id>
        <label>TCEAL8</label>
    </interactant>
    <organismsDiffer>false</organismsDiffer>
    <experiments>3</experiments>
</comment>
<comment type="interaction">
    <interactant intactId="EBI-10975473">
        <id>O60333-2</id>
    </interactant>
    <interactant intactId="EBI-745182">
        <id>Q9BQ70</id>
        <label>TCF25</label>
    </interactant>
    <organismsDiffer>false</organismsDiffer>
    <experiments>3</experiments>
</comment>
<comment type="interaction">
    <interactant intactId="EBI-10975473">
        <id>O60333-2</id>
    </interactant>
    <interactant intactId="EBI-348333">
        <id>Q13569</id>
        <label>TDG</label>
    </interactant>
    <organismsDiffer>false</organismsDiffer>
    <experiments>3</experiments>
</comment>
<comment type="interaction">
    <interactant intactId="EBI-10975473">
        <id>O60333-2</id>
    </interactant>
    <interactant intactId="EBI-2562799">
        <id>Q86WV5</id>
        <label>TEN1</label>
    </interactant>
    <organismsDiffer>false</organismsDiffer>
    <experiments>3</experiments>
</comment>
<comment type="interaction">
    <interactant intactId="EBI-10975473">
        <id>O60333-2</id>
    </interactant>
    <interactant intactId="EBI-752030">
        <id>Q96A09</id>
        <label>TENT5B</label>
    </interactant>
    <organismsDiffer>false</organismsDiffer>
    <experiments>3</experiments>
</comment>
<comment type="interaction">
    <interactant intactId="EBI-10975473">
        <id>O60333-2</id>
    </interactant>
    <interactant intactId="EBI-13323487">
        <id>Q8NA77</id>
        <label>TEX19</label>
    </interactant>
    <organismsDiffer>false</organismsDiffer>
    <experiments>3</experiments>
</comment>
<comment type="interaction">
    <interactant intactId="EBI-10975473">
        <id>O60333-2</id>
    </interactant>
    <interactant intactId="EBI-25842075">
        <id>P21980-2</id>
        <label>TGM2</label>
    </interactant>
    <organismsDiffer>false</organismsDiffer>
    <experiments>3</experiments>
</comment>
<comment type="interaction">
    <interactant intactId="EBI-10975473">
        <id>O60333-2</id>
    </interactant>
    <interactant intactId="EBI-2372529">
        <id>O60830</id>
        <label>TIMM17B</label>
    </interactant>
    <organismsDiffer>false</organismsDiffer>
    <experiments>3</experiments>
</comment>
<comment type="interaction">
    <interactant intactId="EBI-10975473">
        <id>O60333-2</id>
    </interactant>
    <interactant intactId="EBI-25830583">
        <id>Q8N0U2</id>
        <label>TMEM61</label>
    </interactant>
    <organismsDiffer>false</organismsDiffer>
    <experiments>3</experiments>
</comment>
<comment type="interaction">
    <interactant intactId="EBI-10975473">
        <id>O60333-2</id>
    </interactant>
    <interactant intactId="EBI-9089156">
        <id>Q8IUR5-4</id>
        <label>TMTC1</label>
    </interactant>
    <organismsDiffer>false</organismsDiffer>
    <experiments>3</experiments>
</comment>
<comment type="interaction">
    <interactant intactId="EBI-10975473">
        <id>O60333-2</id>
    </interactant>
    <interactant intactId="EBI-25831574">
        <id>Q71RG4-4</id>
        <label>TMUB2</label>
    </interactant>
    <organismsDiffer>false</organismsDiffer>
    <experiments>3</experiments>
</comment>
<comment type="interaction">
    <interactant intactId="EBI-10975473">
        <id>O60333-2</id>
    </interactant>
    <interactant intactId="EBI-740098">
        <id>P36406</id>
        <label>TRIM23</label>
    </interactant>
    <organismsDiffer>false</organismsDiffer>
    <experiments>3</experiments>
</comment>
<comment type="interaction">
    <interactant intactId="EBI-10975473">
        <id>O60333-2</id>
    </interactant>
    <interactant intactId="EBI-17716262">
        <id>Q9UPQ4-2</id>
        <label>TRIM35</label>
    </interactant>
    <organismsDiffer>false</organismsDiffer>
    <experiments>3</experiments>
</comment>
<comment type="interaction">
    <interactant intactId="EBI-10975473">
        <id>O60333-2</id>
    </interactant>
    <interactant intactId="EBI-25843781">
        <id>L8E9Q5</id>
        <label>TRIM65</label>
    </interactant>
    <organismsDiffer>false</organismsDiffer>
    <experiments>3</experiments>
</comment>
<comment type="interaction">
    <interactant intactId="EBI-10975473">
        <id>O60333-2</id>
    </interactant>
    <interactant intactId="EBI-11525489">
        <id>Q86WT6-2</id>
        <label>TRIM69</label>
    </interactant>
    <organismsDiffer>false</organismsDiffer>
    <experiments>3</experiments>
</comment>
<comment type="interaction">
    <interactant intactId="EBI-10975473">
        <id>O60333-2</id>
    </interactant>
    <interactant intactId="EBI-720828">
        <id>Q9C026</id>
        <label>TRIM9</label>
    </interactant>
    <organismsDiffer>false</organismsDiffer>
    <experiments>3</experiments>
</comment>
<comment type="interaction">
    <interactant intactId="EBI-10975473">
        <id>O60333-2</id>
    </interactant>
    <interactant intactId="EBI-12806590">
        <id>Q86WV8</id>
        <label>TSC1</label>
    </interactant>
    <organismsDiffer>false</organismsDiffer>
    <experiments>3</experiments>
</comment>
<comment type="interaction">
    <interactant intactId="EBI-10975473">
        <id>O60333-2</id>
    </interactant>
    <interactant intactId="EBI-739485">
        <id>Q9Y3Q8</id>
        <label>TSC22D4</label>
    </interactant>
    <organismsDiffer>false</organismsDiffer>
    <experiments>3</experiments>
</comment>
<comment type="interaction">
    <interactant intactId="EBI-10975473">
        <id>O60333-2</id>
    </interactant>
    <interactant intactId="EBI-356735">
        <id>Q9BUF5</id>
        <label>TUBB6</label>
    </interactant>
    <organismsDiffer>false</organismsDiffer>
    <experiments>3</experiments>
</comment>
<comment type="interaction">
    <interactant intactId="EBI-10975473">
        <id>O60333-2</id>
    </interactant>
    <interactant intactId="EBI-10964469">
        <id>Q9UGJ1-2</id>
        <label>TUBGCP4</label>
    </interactant>
    <organismsDiffer>false</organismsDiffer>
    <experiments>3</experiments>
</comment>
<comment type="interaction">
    <interactant intactId="EBI-10975473">
        <id>O60333-2</id>
    </interactant>
    <interactant intactId="EBI-9088812">
        <id>Q5VYS8-5</id>
        <label>TUT7</label>
    </interactant>
    <organismsDiffer>false</organismsDiffer>
    <experiments>3</experiments>
</comment>
<comment type="interaction">
    <interactant intactId="EBI-10975473">
        <id>O60333-2</id>
    </interactant>
    <interactant intactId="EBI-749370">
        <id>Q9BSL1</id>
        <label>UBAC1</label>
    </interactant>
    <organismsDiffer>false</organismsDiffer>
    <experiments>3</experiments>
</comment>
<comment type="interaction">
    <interactant intactId="EBI-10975473">
        <id>O60333-2</id>
    </interactant>
    <interactant intactId="EBI-25840976">
        <id>Q8NBM4-4</id>
        <label>UBAC2</label>
    </interactant>
    <organismsDiffer>false</organismsDiffer>
    <experiments>3</experiments>
</comment>
<comment type="interaction">
    <interactant intactId="EBI-10975473">
        <id>O60333-2</id>
    </interactant>
    <interactant intactId="EBI-348496">
        <id>Q969T4</id>
        <label>UBE2E3</label>
    </interactant>
    <organismsDiffer>false</organismsDiffer>
    <experiments>3</experiments>
</comment>
<comment type="interaction">
    <interactant intactId="EBI-10975473">
        <id>O60333-2</id>
    </interactant>
    <interactant intactId="EBI-1050671">
        <id>Q13404</id>
        <label>UBE2V1</label>
    </interactant>
    <organismsDiffer>false</organismsDiffer>
    <experiments>3</experiments>
</comment>
<comment type="interaction">
    <interactant intactId="EBI-10975473">
        <id>O60333-2</id>
    </interactant>
    <interactant intactId="EBI-11530712">
        <id>Q04323-2</id>
        <label>UBXN1</label>
    </interactant>
    <organismsDiffer>false</organismsDiffer>
    <experiments>3</experiments>
</comment>
<comment type="interaction">
    <interactant intactId="EBI-10975473">
        <id>O60333-2</id>
    </interactant>
    <interactant intactId="EBI-10696113">
        <id>O75604-3</id>
        <label>USP2</label>
    </interactant>
    <organismsDiffer>false</organismsDiffer>
    <experiments>3</experiments>
</comment>
<comment type="interaction">
    <interactant intactId="EBI-10975473">
        <id>O60333-2</id>
    </interactant>
    <interactant intactId="EBI-354022">
        <id>P45880</id>
        <label>VDAC2</label>
    </interactant>
    <organismsDiffer>false</organismsDiffer>
    <experiments>3</experiments>
</comment>
<comment type="interaction">
    <interactant intactId="EBI-10975473">
        <id>O60333-2</id>
    </interactant>
    <interactant intactId="EBI-12157263">
        <id>P40337-2</id>
        <label>VHL</label>
    </interactant>
    <organismsDiffer>false</organismsDiffer>
    <experiments>3</experiments>
</comment>
<comment type="interaction">
    <interactant intactId="EBI-10975473">
        <id>O60333-2</id>
    </interactant>
    <interactant intactId="EBI-2850578">
        <id>Q8NEZ2</id>
        <label>VPS37A</label>
    </interactant>
    <organismsDiffer>false</organismsDiffer>
    <experiments>3</experiments>
</comment>
<comment type="interaction">
    <interactant intactId="EBI-10975473">
        <id>O60333-2</id>
    </interactant>
    <interactant intactId="EBI-6427899">
        <id>P58304</id>
        <label>VSX2</label>
    </interactant>
    <organismsDiffer>false</organismsDiffer>
    <experiments>3</experiments>
</comment>
<comment type="interaction">
    <interactant intactId="EBI-10975473">
        <id>O60333-2</id>
    </interactant>
    <interactant intactId="EBI-1237307">
        <id>Q9BQA1</id>
        <label>WDR77</label>
    </interactant>
    <organismsDiffer>false</organismsDiffer>
    <experiments>3</experiments>
</comment>
<comment type="interaction">
    <interactant intactId="EBI-10975473">
        <id>O60333-2</id>
    </interactant>
    <interactant intactId="EBI-7705033">
        <id>Q9BRX9</id>
        <label>WDR83</label>
    </interactant>
    <organismsDiffer>false</organismsDiffer>
    <experiments>3</experiments>
</comment>
<comment type="interaction">
    <interactant intactId="EBI-10975473">
        <id>O60333-2</id>
    </interactant>
    <interactant intactId="EBI-25840023">
        <id>Q15007-2</id>
        <label>WTAP</label>
    </interactant>
    <organismsDiffer>false</organismsDiffer>
    <experiments>3</experiments>
</comment>
<comment type="interaction">
    <interactant intactId="EBI-10975473">
        <id>O60333-2</id>
    </interactant>
    <interactant intactId="EBI-12040603">
        <id>Q9NZC7-5</id>
        <label>WWOX</label>
    </interactant>
    <organismsDiffer>false</organismsDiffer>
    <experiments>3</experiments>
</comment>
<comment type="interaction">
    <interactant intactId="EBI-10975473">
        <id>O60333-2</id>
    </interactant>
    <interactant intactId="EBI-25842419">
        <id>O43167-2</id>
        <label>ZBTB24</label>
    </interactant>
    <organismsDiffer>false</organismsDiffer>
    <experiments>3</experiments>
</comment>
<comment type="interaction">
    <interactant intactId="EBI-10975473">
        <id>O60333-2</id>
    </interactant>
    <interactant intactId="EBI-14104088">
        <id>Q53FD0-2</id>
        <label>ZC2HC1C</label>
    </interactant>
    <organismsDiffer>false</organismsDiffer>
    <experiments>3</experiments>
</comment>
<comment type="interaction">
    <interactant intactId="EBI-10975473">
        <id>O60333-2</id>
    </interactant>
    <interactant intactId="EBI-2602314">
        <id>Q15776</id>
        <label>ZKSCAN8</label>
    </interactant>
    <organismsDiffer>false</organismsDiffer>
    <experiments>3</experiments>
</comment>
<comment type="interaction">
    <interactant intactId="EBI-10975473">
        <id>O60333-2</id>
    </interactant>
    <interactant intactId="EBI-12055755">
        <id>Q9UJW8-4</id>
        <label>ZNF180</label>
    </interactant>
    <organismsDiffer>false</organismsDiffer>
    <experiments>3</experiments>
</comment>
<comment type="interaction">
    <interactant intactId="EBI-10975473">
        <id>O60333-2</id>
    </interactant>
    <interactant intactId="EBI-2813661">
        <id>Q8N895</id>
        <label>ZNF366</label>
    </interactant>
    <organismsDiffer>false</organismsDiffer>
    <experiments>3</experiments>
</comment>
<comment type="interaction">
    <interactant intactId="EBI-10975473">
        <id>O60333-2</id>
    </interactant>
    <interactant intactId="EBI-8489702">
        <id>Q9C0F3</id>
        <label>ZNF436</label>
    </interactant>
    <organismsDiffer>false</organismsDiffer>
    <experiments>3</experiments>
</comment>
<comment type="interaction">
    <interactant intactId="EBI-10975473">
        <id>O60333-2</id>
    </interactant>
    <interactant intactId="EBI-12010736">
        <id>Q8N0Y2-2</id>
        <label>ZNF444</label>
    </interactant>
    <organismsDiffer>false</organismsDiffer>
    <experiments>3</experiments>
</comment>
<comment type="interaction">
    <interactant intactId="EBI-10975473">
        <id>O60333-2</id>
    </interactant>
    <interactant intactId="EBI-25831733">
        <id>Q96MN9-2</id>
        <label>ZNF488</label>
    </interactant>
    <organismsDiffer>false</organismsDiffer>
    <experiments>3</experiments>
</comment>
<comment type="interaction">
    <interactant intactId="EBI-10975473">
        <id>O60333-2</id>
    </interactant>
    <interactant intactId="EBI-10486136">
        <id>Q6ZNH5</id>
        <label>ZNF497</label>
    </interactant>
    <organismsDiffer>false</organismsDiffer>
    <experiments>3</experiments>
</comment>
<comment type="interaction">
    <interactant intactId="EBI-10975473">
        <id>O60333-2</id>
    </interactant>
    <interactant intactId="EBI-10283126">
        <id>Q96C55</id>
        <label>ZNF524</label>
    </interactant>
    <organismsDiffer>false</organismsDiffer>
    <experiments>3</experiments>
</comment>
<comment type="interaction">
    <interactant intactId="EBI-10975473">
        <id>O60333-2</id>
    </interactant>
    <interactant intactId="EBI-8490788">
        <id>Q68EA5</id>
        <label>ZNF57</label>
    </interactant>
    <organismsDiffer>false</organismsDiffer>
    <experiments>3</experiments>
</comment>
<comment type="interaction">
    <interactant intactId="EBI-10975473">
        <id>O60333-2</id>
    </interactant>
    <interactant intactId="EBI-10172590">
        <id>Q7Z3I7</id>
        <label>ZNF572</label>
    </interactant>
    <organismsDiffer>false</organismsDiffer>
    <experiments>3</experiments>
</comment>
<comment type="interaction">
    <interactant intactId="EBI-10975473">
        <id>O60333-2</id>
    </interactant>
    <interactant intactId="EBI-12939666">
        <id>Q96N77-2</id>
        <label>ZNF641</label>
    </interactant>
    <organismsDiffer>false</organismsDiffer>
    <experiments>3</experiments>
</comment>
<comment type="interaction">
    <interactant intactId="EBI-10975473">
        <id>O60333-2</id>
    </interactant>
    <interactant intactId="EBI-745276">
        <id>Q9BS34</id>
        <label>ZNF670</label>
    </interactant>
    <organismsDiffer>false</organismsDiffer>
    <experiments>3</experiments>
</comment>
<comment type="interaction">
    <interactant intactId="EBI-10975473">
        <id>O60333-2</id>
    </interactant>
    <interactant intactId="EBI-18036029">
        <id>Q3KNS6-3</id>
        <label>ZNF829</label>
    </interactant>
    <organismsDiffer>false</organismsDiffer>
    <experiments>3</experiments>
</comment>
<comment type="interaction">
    <interactant intactId="EBI-10975473">
        <id>O60333-2</id>
    </interactant>
    <interactant intactId="EBI-12270264">
        <id>Q15695</id>
        <label>ZRSR2P1</label>
    </interactant>
    <organismsDiffer>false</organismsDiffer>
    <experiments>3</experiments>
</comment>
<comment type="interaction">
    <interactant intactId="EBI-10975473">
        <id>O60333-2</id>
    </interactant>
    <interactant intactId="EBI-751531">
        <id>O15535</id>
        <label>ZSCAN9</label>
    </interactant>
    <organismsDiffer>false</organismsDiffer>
    <experiments>3</experiments>
</comment>
<comment type="interaction">
    <interactant intactId="EBI-10975473">
        <id>O60333-2</id>
    </interactant>
    <interactant intactId="EBI-1538838">
        <id>Q2QGD7</id>
        <label>ZXDC</label>
    </interactant>
    <organismsDiffer>false</organismsDiffer>
    <experiments>3</experiments>
</comment>
<comment type="interaction">
    <interactant intactId="EBI-10975473">
        <id>O60333-2</id>
    </interactant>
    <interactant intactId="EBI-10211777">
        <id>A0A384ME25</id>
    </interactant>
    <organismsDiffer>false</organismsDiffer>
    <experiments>3</experiments>
</comment>
<comment type="interaction">
    <interactant intactId="EBI-10975473">
        <id>O60333-2</id>
    </interactant>
    <interactant intactId="EBI-25851268">
        <id>B4DLR9</id>
    </interactant>
    <organismsDiffer>false</organismsDiffer>
    <experiments>3</experiments>
</comment>
<comment type="interaction">
    <interactant intactId="EBI-10975473">
        <id>O60333-2</id>
    </interactant>
    <interactant intactId="EBI-25831617">
        <id>B7Z3E8</id>
    </interactant>
    <organismsDiffer>false</organismsDiffer>
    <experiments>3</experiments>
</comment>
<comment type="interaction">
    <interactant intactId="EBI-10975473">
        <id>O60333-2</id>
    </interactant>
    <interactant intactId="EBI-25831943">
        <id>Q7L8T7</id>
    </interactant>
    <organismsDiffer>false</organismsDiffer>
    <experiments>3</experiments>
</comment>
<comment type="interaction">
    <interactant intactId="EBI-10975473">
        <id>O60333-2</id>
    </interactant>
    <interactant intactId="EBI-9088990">
        <id>Q7Z783</id>
    </interactant>
    <organismsDiffer>false</organismsDiffer>
    <experiments>3</experiments>
</comment>
<comment type="interaction">
    <interactant intactId="EBI-10975473">
        <id>O60333-2</id>
    </interactant>
    <interactant intactId="EBI-10259496">
        <id>Q86V28</id>
    </interactant>
    <organismsDiffer>false</organismsDiffer>
    <experiments>3</experiments>
</comment>
<comment type="interaction">
    <interactant intactId="EBI-465669">
        <id>O60333-3</id>
    </interactant>
    <interactant intactId="EBI-357481">
        <id>Q12959</id>
        <label>DLG1</label>
    </interactant>
    <organismsDiffer>false</organismsDiffer>
    <experiments>4</experiments>
</comment>
<comment type="interaction">
    <interactant intactId="EBI-465669">
        <id>O60333-3</id>
    </interactant>
    <interactant intactId="EBI-80389">
        <id>P78352</id>
        <label>DLG4</label>
    </interactant>
    <organismsDiffer>false</organismsDiffer>
    <experiments>4</experiments>
</comment>
<comment type="interaction">
    <interactant intactId="EBI-465669">
        <id>O60333-3</id>
    </interactant>
    <interactant intactId="EBI-924464">
        <id>Q96QZ7</id>
        <label>MAGI1</label>
    </interactant>
    <organismsDiffer>false</organismsDiffer>
    <experiments>3</experiments>
</comment>
<comment type="interaction">
    <interactant intactId="EBI-465669">
        <id>O60333-3</id>
    </interactant>
    <interactant intactId="EBI-396947">
        <id>Q63622</id>
        <label>Dlg2</label>
    </interactant>
    <organismsDiffer>true</organismsDiffer>
    <experiments>3</experiments>
</comment>
<comment type="subcellular location">
    <subcellularLocation>
        <location evidence="2">Cytoplasm</location>
        <location evidence="2">Cytoskeleton</location>
    </subcellularLocation>
    <text evidence="2">Has a plus-end-directed microtubule motor activity and therefore associates with microtubules.</text>
</comment>
<comment type="subcellular location">
    <molecule>Isoform 2</molecule>
    <subcellularLocation>
        <location evidence="2">Cytoplasmic vesicle</location>
        <location evidence="2">Secretory vesicle</location>
        <location evidence="2">Synaptic vesicle membrane</location>
    </subcellularLocation>
    <text evidence="2">Associates with synaptic vesicles and mediates their anterograde transport along axonal microtubules.</text>
</comment>
<comment type="subcellular location">
    <molecule>Isoform 3</molecule>
    <subcellularLocation>
        <location evidence="12">Mitochondrion</location>
    </subcellularLocation>
    <text evidence="2">Associates with mitochondria and mediates their movement along microtubules.</text>
</comment>
<comment type="alternative products">
    <event type="alternative splicing"/>
    <isoform>
        <id>O60333-1</id>
        <name>1</name>
        <sequence type="displayed"/>
    </isoform>
    <isoform>
        <id>O60333-2</id>
        <name>2</name>
        <name>KIF1Bbeta</name>
        <sequence type="described" ref="VSP_002858 VSP_002859"/>
    </isoform>
    <isoform>
        <id>O60333-3</id>
        <name>3</name>
        <name>KIF1Balpha</name>
        <sequence type="described" ref="VSP_002858 VSP_002859 VSP_002860 VSP_002861"/>
    </isoform>
    <isoform>
        <id>O60333-4</id>
        <name>4</name>
        <sequence type="described" ref="VSP_009381"/>
    </isoform>
</comment>
<comment type="tissue specificity">
    <text evidence="8 10 11">Isoform 3 is abundant in the skeletal muscle. It is also expressed in fetal brain, lung and kidney, and adult heart, placenta, testis, ovary and small intestine. Isoform 2 is abundant in the brain and also expressed in fetal heart, lung, liver and kidney, and adult skeletal muscle, placenta, liver, kidney, heart, spleen, thymus, prostate, testis, ovary, small intestine, colon and pancreas.</text>
</comment>
<comment type="disease" evidence="9">
    <disease id="DI-00274">
        <name>Charcot-Marie-Tooth disease, axonal, type 2A1</name>
        <acronym>CMT2A1</acronym>
        <description>A dominant axonal form of Charcot-Marie-Tooth disease, a disorder of the peripheral nervous system, characterized by progressive weakness and atrophy, initially of the peroneal muscles and later of the distal muscles of the arms. Charcot-Marie-Tooth disease is classified in two main groups on the basis of electrophysiologic properties and histopathology: primary peripheral demyelinating neuropathies (designated CMT1 when they are dominantly inherited) and primary peripheral axonal neuropathies (CMT2). Neuropathies of the CMT2 group are characterized by signs of axonal degeneration in the absence of obvious myelin alterations, normal or slightly reduced nerve conduction velocities, and progressive distal muscle weakness and atrophy.</description>
        <dbReference type="MIM" id="118210"/>
    </disease>
    <text>The disease may be caused by variants affecting the gene represented in this entry.</text>
</comment>
<comment type="disease">
    <disease id="DI-02633">
        <name>Neuroblastoma 1</name>
        <acronym>NBLST1</acronym>
        <description>A common neoplasm of early childhood arising from embryonic cells that form the primitive neural crest and give rise to the adrenal medulla and the sympathetic nervous system.</description>
        <dbReference type="MIM" id="256700"/>
    </disease>
    <text>Disease susceptibility is associated with variants affecting the gene represented in this entry.</text>
</comment>
<comment type="disease" evidence="13">
    <disease id="DI-02160">
        <name>Pheochromocytoma</name>
        <acronym>PCC</acronym>
        <description>A catecholamine-producing tumor of chromaffin tissue of the adrenal medulla or sympathetic paraganglia. The cardinal symptom, reflecting the increased secretion of epinephrine and norepinephrine, is hypertension, which may be persistent or intermittent.</description>
        <dbReference type="MIM" id="171300"/>
    </disease>
    <text>Disease susceptibility is associated with variants affecting the gene represented in this entry.</text>
</comment>
<comment type="similarity">
    <text evidence="6">Belongs to the TRAFAC class myosin-kinesin ATPase superfamily. Kinesin family. Unc-104 subfamily.</text>
</comment>
<comment type="sequence caution" evidence="21">
    <conflict type="erroneous initiation">
        <sequence resource="EMBL-CDS" id="AAH01415"/>
    </conflict>
    <text>Truncated N-terminus.</text>
</comment>
<comment type="sequence caution" evidence="21">
    <conflict type="erroneous initiation">
        <sequence resource="EMBL-CDS" id="AAP35838"/>
    </conflict>
    <text>Truncated N-terminus.</text>
</comment>
<comment type="sequence caution" evidence="21">
    <conflict type="erroneous initiation">
        <sequence resource="EMBL-CDS" id="BAA25517"/>
    </conflict>
    <text>Extended N-terminus.</text>
</comment>
<comment type="sequence caution" evidence="21">
    <conflict type="erroneous initiation">
        <sequence resource="EMBL-CDS" id="BAA95972"/>
    </conflict>
    <text>Extended N-terminus.</text>
</comment>
<comment type="sequence caution" evidence="21">
    <conflict type="erroneous initiation">
        <sequence resource="EMBL-CDS" id="BAB69038"/>
    </conflict>
    <text>Truncated N-terminus.</text>
</comment>
<comment type="online information" name="Inherited peripheral neuropathies mutation db">
    <link uri="https://uantwerpen.vib.be/CMTMutations"/>
</comment>
<evidence type="ECO:0000250" key="1">
    <source>
        <dbReference type="UniProtKB" id="O88658"/>
    </source>
</evidence>
<evidence type="ECO:0000250" key="2">
    <source>
        <dbReference type="UniProtKB" id="Q60575"/>
    </source>
</evidence>
<evidence type="ECO:0000255" key="3"/>
<evidence type="ECO:0000255" key="4">
    <source>
        <dbReference type="PROSITE-ProRule" id="PRU00086"/>
    </source>
</evidence>
<evidence type="ECO:0000255" key="5">
    <source>
        <dbReference type="PROSITE-ProRule" id="PRU00145"/>
    </source>
</evidence>
<evidence type="ECO:0000255" key="6">
    <source>
        <dbReference type="PROSITE-ProRule" id="PRU00283"/>
    </source>
</evidence>
<evidence type="ECO:0000256" key="7">
    <source>
        <dbReference type="SAM" id="MobiDB-lite"/>
    </source>
</evidence>
<evidence type="ECO:0000269" key="8">
    <source>
    </source>
</evidence>
<evidence type="ECO:0000269" key="9">
    <source>
    </source>
</evidence>
<evidence type="ECO:0000269" key="10">
    <source>
    </source>
</evidence>
<evidence type="ECO:0000269" key="11">
    <source>
    </source>
</evidence>
<evidence type="ECO:0000269" key="12">
    <source>
    </source>
</evidence>
<evidence type="ECO:0000269" key="13">
    <source>
    </source>
</evidence>
<evidence type="ECO:0000303" key="14">
    <source>
    </source>
</evidence>
<evidence type="ECO:0000303" key="15">
    <source>
    </source>
</evidence>
<evidence type="ECO:0000303" key="16">
    <source>
    </source>
</evidence>
<evidence type="ECO:0000303" key="17">
    <source>
    </source>
</evidence>
<evidence type="ECO:0000303" key="18">
    <source ref="1"/>
</evidence>
<evidence type="ECO:0000303" key="19">
    <source ref="4"/>
</evidence>
<evidence type="ECO:0000303" key="20">
    <source ref="5"/>
</evidence>
<evidence type="ECO:0000305" key="21"/>
<evidence type="ECO:0000305" key="22">
    <source>
    </source>
</evidence>
<evidence type="ECO:0000312" key="23">
    <source>
        <dbReference type="EMBL" id="BAA95972.2"/>
    </source>
</evidence>
<evidence type="ECO:0000312" key="24">
    <source>
        <dbReference type="HGNC" id="HGNC:16636"/>
    </source>
</evidence>
<evidence type="ECO:0007744" key="25">
    <source>
    </source>
</evidence>
<evidence type="ECO:0007744" key="26">
    <source>
    </source>
</evidence>
<evidence type="ECO:0007744" key="27">
    <source>
    </source>
</evidence>
<evidence type="ECO:0007744" key="28">
    <source>
    </source>
</evidence>
<evidence type="ECO:0007744" key="29">
    <source>
    </source>
</evidence>
<evidence type="ECO:0007744" key="30">
    <source>
    </source>
</evidence>
<evidence type="ECO:0007744" key="31">
    <source>
    </source>
</evidence>
<evidence type="ECO:0007829" key="32">
    <source>
        <dbReference type="PDB" id="2EH0"/>
    </source>
</evidence>
<protein>
    <recommendedName>
        <fullName evidence="22">Kinesin-like protein KIF1B</fullName>
        <shortName evidence="18">Klp</shortName>
        <ecNumber evidence="22">5.6.1.3</ecNumber>
    </recommendedName>
</protein>
<gene>
    <name evidence="24" type="primary">KIF1B</name>
    <name evidence="14" type="synonym">KIAA0591</name>
    <name evidence="23" type="synonym">KIAA1448</name>
</gene>
<name>KIF1B_HUMAN</name>
<proteinExistence type="evidence at protein level"/>
<accession>O60333</accession>
<accession>A6NFS8</accession>
<accession>A6NKQ4</accession>
<accession>Q4VXC3</accession>
<accession>Q4VXC4</accession>
<accession>Q4VXC5</accession>
<accession>Q4VXC6</accession>
<accession>Q96Q94</accession>
<accession>Q9BV80</accession>
<accession>Q9P280</accession>
<organism>
    <name type="scientific">Homo sapiens</name>
    <name type="common">Human</name>
    <dbReference type="NCBI Taxonomy" id="9606"/>
    <lineage>
        <taxon>Eukaryota</taxon>
        <taxon>Metazoa</taxon>
        <taxon>Chordata</taxon>
        <taxon>Craniata</taxon>
        <taxon>Vertebrata</taxon>
        <taxon>Euteleostomi</taxon>
        <taxon>Mammalia</taxon>
        <taxon>Eutheria</taxon>
        <taxon>Euarchontoglires</taxon>
        <taxon>Primates</taxon>
        <taxon>Haplorrhini</taxon>
        <taxon>Catarrhini</taxon>
        <taxon>Hominidae</taxon>
        <taxon>Homo</taxon>
    </lineage>
</organism>
<feature type="initiator methionine" description="Removed" evidence="29">
    <location>
        <position position="1"/>
    </location>
</feature>
<feature type="chain" id="PRO_0000125407" description="Kinesin-like protein KIF1B">
    <location>
        <begin position="2"/>
        <end position="1816"/>
    </location>
</feature>
<feature type="domain" description="Kinesin motor" evidence="6">
    <location>
        <begin position="5"/>
        <end position="354"/>
    </location>
</feature>
<feature type="domain" description="FHA" evidence="4">
    <location>
        <begin position="556"/>
        <end position="612"/>
    </location>
</feature>
<feature type="domain" description="PH" evidence="5">
    <location>
        <begin position="1702"/>
        <end position="1799"/>
    </location>
</feature>
<feature type="region of interest" description="Interaction with KIFBP" evidence="12">
    <location>
        <begin position="270"/>
        <end position="350"/>
    </location>
</feature>
<feature type="region of interest" description="Disordered" evidence="7">
    <location>
        <begin position="431"/>
        <end position="450"/>
    </location>
</feature>
<feature type="region of interest" description="Disordered" evidence="7">
    <location>
        <begin position="1550"/>
        <end position="1570"/>
    </location>
</feature>
<feature type="region of interest" description="Disordered" evidence="7">
    <location>
        <begin position="1617"/>
        <end position="1660"/>
    </location>
</feature>
<feature type="coiled-coil region" evidence="3">
    <location>
        <begin position="365"/>
        <end position="386"/>
    </location>
</feature>
<feature type="coiled-coil region" evidence="3">
    <location>
        <begin position="470"/>
        <end position="502"/>
    </location>
</feature>
<feature type="coiled-coil region" evidence="3">
    <location>
        <begin position="668"/>
        <end position="737"/>
    </location>
</feature>
<feature type="coiled-coil region" evidence="3">
    <location>
        <begin position="841"/>
        <end position="869"/>
    </location>
</feature>
<feature type="compositionally biased region" description="Low complexity" evidence="7">
    <location>
        <begin position="432"/>
        <end position="450"/>
    </location>
</feature>
<feature type="compositionally biased region" description="Polar residues" evidence="7">
    <location>
        <begin position="1554"/>
        <end position="1566"/>
    </location>
</feature>
<feature type="compositionally biased region" description="Low complexity" evidence="7">
    <location>
        <begin position="1621"/>
        <end position="1634"/>
    </location>
</feature>
<feature type="compositionally biased region" description="Polar residues" evidence="7">
    <location>
        <begin position="1640"/>
        <end position="1658"/>
    </location>
</feature>
<feature type="binding site" evidence="6">
    <location>
        <begin position="97"/>
        <end position="104"/>
    </location>
    <ligand>
        <name>ATP</name>
        <dbReference type="ChEBI" id="CHEBI:30616"/>
    </ligand>
</feature>
<feature type="modified residue" description="N-acetylserine" evidence="29">
    <location>
        <position position="2"/>
    </location>
</feature>
<feature type="modified residue" description="Phosphothreonine" evidence="2">
    <location>
        <position position="647"/>
    </location>
</feature>
<feature type="modified residue" description="Phosphothreonine" evidence="2">
    <location>
        <position position="652"/>
    </location>
</feature>
<feature type="modified residue" description="Phosphoserine" evidence="30">
    <location>
        <position position="1054"/>
    </location>
</feature>
<feature type="modified residue" description="Phosphoserine" evidence="25 27 30">
    <location>
        <position position="1057"/>
    </location>
</feature>
<feature type="modified residue" description="Phosphothreonine" evidence="26">
    <location>
        <position position="1075"/>
    </location>
</feature>
<feature type="modified residue" description="Phosphoserine" evidence="30">
    <location>
        <position position="1416"/>
    </location>
</feature>
<feature type="modified residue" description="Phosphoserine" evidence="27 30 31">
    <location>
        <position position="1454"/>
    </location>
</feature>
<feature type="modified residue" description="Phosphoserine" evidence="26 27 30">
    <location>
        <position position="1487"/>
    </location>
</feature>
<feature type="modified residue" description="Phosphoserine" evidence="31">
    <location>
        <position position="1573"/>
    </location>
</feature>
<feature type="modified residue" description="Phosphoserine" evidence="31">
    <location>
        <position position="1603"/>
    </location>
</feature>
<feature type="modified residue" description="Phosphoserine" evidence="27">
    <location>
        <position position="1610"/>
    </location>
</feature>
<feature type="modified residue" description="Phosphoserine" evidence="27 31">
    <location>
        <position position="1613"/>
    </location>
</feature>
<feature type="splice variant" id="VSP_002858" description="In isoform 2 and isoform 3." evidence="15 16 17 19">
    <location>
        <begin position="289"/>
        <end position="294"/>
    </location>
</feature>
<feature type="splice variant" id="VSP_002859" description="In isoform 2 and isoform 3." evidence="15 16 17 19">
    <original>IDPLIDDYSGSGSKYLKDFQNNKHRYLLASENQRPGHFSTA</original>
    <variation>T</variation>
    <location>
        <begin position="394"/>
        <end position="434"/>
    </location>
</feature>
<feature type="splice variant" id="VSP_002860" description="In isoform 3." evidence="15 16 17 19">
    <original>YESKLQALQKQVETRSLAAETTEEEEEEEEVPWTQHEFELAQWAFRKWKSHQFTSLRDLLWGNAVYLKEANAISVELKKKVQFQFVLLTDTLYSPLPPELLPTEMEKTHEDRPFPRTVVAVEVQDLKNGATHYWSLEKLKQRLDLMREMYDRAGEMASSAQDESETTVTGSDPFYDRFHWFKLVGSSPIFHGCVNERLADRTPSPTFSTADSDITELADEQQDEMEDFDDEAFVDDAGSDAGTEEGSDLFSDGHDPFYDRSPWFILVGRAFVYLSNLLYPVPLIHRVAIVSEKGEVRGFLRVAVQAIAADEEAPDYGSGIRQSGTAKISFDNEYFNQSDFSSVAMTRSGLSLEELRIVEGQGQSSEVITPPEEISRINDLDLKSSTLLDGKMVMEGFSEEIGNHLKLGSAFTFRVTVLQASGILPEYADIFCQFNFLHRHDEAFSTEPLKNNGRGSPLAFYHVQNIAVEITESFVDYIKTKPIVFEVFGH</original>
    <variation>ADSDSGDDSDKRSCEESWKLITSLREKLPPSKLQTIVKKCGLPSSGKKREPIKMYQIPQRRRLSKDSKWVTISDLKIQAVKEICYEVALNDFRHSRQEIEALAIVKMKELCAMYGKKDPNERDSWRAVARDVWDTVGVGDEKIEDVMATGKGSTDVDDLKVHIDKLEDILQEVKKQNNMKDEEIKVLRNKMLKMEKVLPLIGSQEQKSPGSHKAKEPVGAGVSSTSENNVSKGDNGELAKEERVSQLMNGDPAFRRGRLRWMRQEQIRFKNLQQQEITKQLRRQNVPHRFIPPENRKPRFPFKSNPKHRNSWSPGTHIIITEDEVIELRIPKDDEARKGNKEESQEKGGKGAFKDPQFPWGSQGMRSQDHIQVSKQHINNQQQPPQLRWRSNSLNNGQPKSTRCQASASAESLNSHSGHPTADVQTFQAKRHIHQHRQSYCNYNTGGQLEGNAATSYQKQTDKPSHCSQFVTPPRMRRQFSAPNLKAGRETTV</variation>
    <location>
        <begin position="707"/>
        <end position="1196"/>
    </location>
</feature>
<feature type="splice variant" id="VSP_002861" description="In isoform 3." evidence="15 16 17 19">
    <location>
        <begin position="1197"/>
        <end position="1816"/>
    </location>
</feature>
<feature type="splice variant" id="VSP_009381" description="In isoform 4." evidence="14 20">
    <original>SKLSRRCPSQSKY</original>
    <variation>PGHLASEIIREDKSVSFSCQ</variation>
    <location>
        <begin position="1804"/>
        <end position="1816"/>
    </location>
</feature>
<feature type="sequence variant" id="VAR_063531" description="In a medulloblastoma sample; somatic mutation; loss of ability to induce apoptosis; dbSNP:rs1269940164." evidence="13">
    <original>S</original>
    <variation>L</variation>
    <location>
        <position position="34"/>
    </location>
</feature>
<feature type="sequence variant" id="VAR_011515" description="In CMT2A1; dbSNP:rs121908160." evidence="9">
    <original>Q</original>
    <variation>L</variation>
    <location>
        <position position="98"/>
    </location>
</feature>
<feature type="sequence variant" id="VAR_063532" description="Confers susceptibility to neuroblastoma; found as germline mutation in a neuroblastoma patient; loss of ability to induce apoptosis; dbSNP:rs121908161." evidence="13">
    <original>E</original>
    <variation>V</variation>
    <location>
        <position position="692"/>
    </location>
</feature>
<feature type="sequence variant" id="VAR_063533" description="Confers susceptibility to neuroblastoma; found as germline mutation in a neuroblastoma patient; loss of ability to induce apoptosis; dbSNP:rs121908162." evidence="13">
    <original>T</original>
    <variation>I</variation>
    <location>
        <position position="873"/>
    </location>
</feature>
<feature type="sequence variant" id="VAR_063534" description="In dbSNP:rs2297881." evidence="13">
    <original>Y</original>
    <variation>C</variation>
    <location>
        <position position="1133"/>
    </location>
</feature>
<feature type="sequence variant" id="VAR_063535" description="Confers susceptibility to neuroblastoma; found as germline mutation in a neuroblastoma patient; loss of ability to induce apoptosis; dbSNP:rs121908163." evidence="13">
    <original>P</original>
    <variation>S</variation>
    <location>
        <position position="1263"/>
    </location>
</feature>
<feature type="sequence variant" id="VAR_063536" description="Confers susceptibility to pheochromocytoma; found as germline mutation in a pheochromocytoma family; loss of ability to induce apoptosis; dbSNP:rs121908164." evidence="13">
    <original>S</original>
    <variation>N</variation>
    <location>
        <position position="1527"/>
    </location>
</feature>
<feature type="sequence variant" id="VAR_063537" description="In dbSNP:rs77172218." evidence="13">
    <original>V</original>
    <variation>M</variation>
    <location>
        <position position="1600"/>
    </location>
</feature>
<feature type="sequence variant" id="VAR_063538" description="In a pheochromocytoma sample; loss of ability to induce apoptosis; dbSNP:rs143669846." evidence="13">
    <original>E</original>
    <variation>K</variation>
    <location>
        <position position="1674"/>
    </location>
</feature>
<feature type="sequence conflict" description="In Ref. 8; BAA25517." evidence="21" ref="8">
    <original>E</original>
    <variation>G</variation>
    <location>
        <position position="87"/>
    </location>
</feature>
<feature type="sequence conflict" description="In Ref. 3; AAK49332, 4; AAK85155 and 5; AAN17742." evidence="21" ref="3 4 5">
    <original>KIN</original>
    <variation>TNH</variation>
    <location>
        <begin position="129"/>
        <end position="131"/>
    </location>
</feature>
<feature type="sequence conflict" description="In Ref. 3; AAK49332, 4; AAK85155 and 5; AAN17742." evidence="21" ref="3 4 5">
    <original>E</original>
    <variation>D</variation>
    <location>
        <position position="170"/>
    </location>
</feature>
<feature type="sequence conflict" description="In Ref. 3; AAK49332, 4; AAK85155 and 5; AAN17742." evidence="21" ref="3 4 5">
    <original>L</original>
    <variation>R</variation>
    <location>
        <position position="174"/>
    </location>
</feature>
<feature type="sequence conflict" description="In Ref. 3; AAK49332, 4; AAK85155 and 5; AAN17742." evidence="21" ref="3 4 5">
    <original>AVF</original>
    <variation>VVY</variation>
    <location>
        <begin position="219"/>
        <end position="221"/>
    </location>
</feature>
<feature type="sequence conflict" description="In Ref. 3; AAK49332, 4; AAK85155 and 5; AAN17742." evidence="21" ref="3 4 5">
    <original>NLSTE</original>
    <variation>ILATV</variation>
    <location>
        <begin position="235"/>
        <end position="239"/>
    </location>
</feature>
<feature type="sequence conflict" description="In Ref. 3; AAK49332, 4; AAK85155 and 5; AAN17742." evidence="21" ref="3 4 5">
    <original>I</original>
    <variation>T</variation>
    <location>
        <position position="244"/>
    </location>
</feature>
<feature type="sequence conflict" description="In Ref. 3; AAK49332, 4; AAK85155 and 5; AAN17742." evidence="21" ref="3 4 5">
    <original>E</original>
    <variation>D</variation>
    <location>
        <position position="253"/>
    </location>
</feature>
<feature type="sequence conflict" description="In Ref. 3; AAK49332, 4; AAK85155 and 5; AAN17742." evidence="21" ref="3 4 5">
    <original>D</original>
    <variation>A</variation>
    <location>
        <position position="256"/>
    </location>
</feature>
<feature type="sequence conflict" description="In Ref. 3; AAK49332, 4; AAK85155 and 5; AAN17742." evidence="21" ref="3 4 5">
    <original>N</original>
    <variation>I</variation>
    <location>
        <position position="270"/>
    </location>
</feature>
<feature type="sequence conflict" description="In Ref. 2; BAB69038." evidence="21" ref="2">
    <original>D</original>
    <variation>G</variation>
    <location>
        <position position="363"/>
    </location>
</feature>
<feature type="strand" evidence="32">
    <location>
        <begin position="533"/>
        <end position="535"/>
    </location>
</feature>
<feature type="strand" evidence="32">
    <location>
        <begin position="547"/>
        <end position="550"/>
    </location>
</feature>
<feature type="strand" evidence="32">
    <location>
        <begin position="553"/>
        <end position="559"/>
    </location>
</feature>
<feature type="strand" evidence="32">
    <location>
        <begin position="563"/>
        <end position="565"/>
    </location>
</feature>
<feature type="strand" evidence="32">
    <location>
        <begin position="568"/>
        <end position="570"/>
    </location>
</feature>
<feature type="strand" evidence="32">
    <location>
        <begin position="573"/>
        <end position="575"/>
    </location>
</feature>
<feature type="strand" evidence="32">
    <location>
        <begin position="580"/>
        <end position="587"/>
    </location>
</feature>
<feature type="strand" evidence="32">
    <location>
        <begin position="593"/>
        <end position="597"/>
    </location>
</feature>
<feature type="strand" evidence="32">
    <location>
        <begin position="601"/>
        <end position="603"/>
    </location>
</feature>
<feature type="strand" evidence="32">
    <location>
        <begin position="605"/>
        <end position="607"/>
    </location>
</feature>
<feature type="strand" evidence="32">
    <location>
        <begin position="625"/>
        <end position="629"/>
    </location>
</feature>
<feature type="strand" evidence="32">
    <location>
        <begin position="633"/>
        <end position="635"/>
    </location>
</feature>
<feature type="helix" evidence="32">
    <location>
        <begin position="637"/>
        <end position="640"/>
    </location>
</feature>
<feature type="turn" evidence="32">
    <location>
        <begin position="641"/>
        <end position="645"/>
    </location>
</feature>
<feature type="modified residue" description="Phosphoserine" evidence="28">
    <location sequence="O60333-3">
        <position position="663"/>
    </location>
</feature>
<feature type="modified residue" description="Phosphoserine" evidence="28 31">
    <location sequence="O60333-3">
        <position position="665"/>
    </location>
</feature>
<feature type="modified residue" description="Phosphoserine" evidence="27">
    <location sequence="O60333-3">
        <position position="1141"/>
    </location>
</feature>
<keyword id="KW-0002">3D-structure</keyword>
<keyword id="KW-0007">Acetylation</keyword>
<keyword id="KW-0025">Alternative splicing</keyword>
<keyword id="KW-0053">Apoptosis</keyword>
<keyword id="KW-0067">ATP-binding</keyword>
<keyword id="KW-0144">Charcot-Marie-Tooth disease</keyword>
<keyword id="KW-0175">Coiled coil</keyword>
<keyword id="KW-0963">Cytoplasm</keyword>
<keyword id="KW-0968">Cytoplasmic vesicle</keyword>
<keyword id="KW-0206">Cytoskeleton</keyword>
<keyword id="KW-0225">Disease variant</keyword>
<keyword id="KW-0413">Isomerase</keyword>
<keyword id="KW-0472">Membrane</keyword>
<keyword id="KW-0493">Microtubule</keyword>
<keyword id="KW-0496">Mitochondrion</keyword>
<keyword id="KW-0505">Motor protein</keyword>
<keyword id="KW-0523">Neurodegeneration</keyword>
<keyword id="KW-0622">Neuropathy</keyword>
<keyword id="KW-0547">Nucleotide-binding</keyword>
<keyword id="KW-0597">Phosphoprotein</keyword>
<keyword id="KW-1267">Proteomics identification</keyword>
<keyword id="KW-1185">Reference proteome</keyword>
<keyword id="KW-0770">Synapse</keyword>